<name>PGFRB_HUMAN</name>
<evidence type="ECO:0000250" key="1">
    <source>
        <dbReference type="UniProtKB" id="P05622"/>
    </source>
</evidence>
<evidence type="ECO:0000255" key="2"/>
<evidence type="ECO:0000255" key="3">
    <source>
        <dbReference type="PROSITE-ProRule" id="PRU00114"/>
    </source>
</evidence>
<evidence type="ECO:0000255" key="4">
    <source>
        <dbReference type="PROSITE-ProRule" id="PRU00159"/>
    </source>
</evidence>
<evidence type="ECO:0000255" key="5">
    <source>
        <dbReference type="PROSITE-ProRule" id="PRU10028"/>
    </source>
</evidence>
<evidence type="ECO:0000256" key="6">
    <source>
        <dbReference type="SAM" id="MobiDB-lite"/>
    </source>
</evidence>
<evidence type="ECO:0000269" key="7">
    <source>
    </source>
</evidence>
<evidence type="ECO:0000269" key="8">
    <source>
    </source>
</evidence>
<evidence type="ECO:0000269" key="9">
    <source>
    </source>
</evidence>
<evidence type="ECO:0000269" key="10">
    <source>
    </source>
</evidence>
<evidence type="ECO:0000269" key="11">
    <source>
    </source>
</evidence>
<evidence type="ECO:0000269" key="12">
    <source>
    </source>
</evidence>
<evidence type="ECO:0000269" key="13">
    <source>
    </source>
</evidence>
<evidence type="ECO:0000269" key="14">
    <source>
    </source>
</evidence>
<evidence type="ECO:0000269" key="15">
    <source>
    </source>
</evidence>
<evidence type="ECO:0000269" key="16">
    <source>
    </source>
</evidence>
<evidence type="ECO:0000269" key="17">
    <source>
    </source>
</evidence>
<evidence type="ECO:0000269" key="18">
    <source>
    </source>
</evidence>
<evidence type="ECO:0000269" key="19">
    <source>
    </source>
</evidence>
<evidence type="ECO:0000269" key="20">
    <source>
    </source>
</evidence>
<evidence type="ECO:0000269" key="21">
    <source>
    </source>
</evidence>
<evidence type="ECO:0000269" key="22">
    <source>
    </source>
</evidence>
<evidence type="ECO:0000269" key="23">
    <source>
    </source>
</evidence>
<evidence type="ECO:0000269" key="24">
    <source>
    </source>
</evidence>
<evidence type="ECO:0000269" key="25">
    <source>
    </source>
</evidence>
<evidence type="ECO:0000269" key="26">
    <source>
    </source>
</evidence>
<evidence type="ECO:0000269" key="27">
    <source>
    </source>
</evidence>
<evidence type="ECO:0000269" key="28">
    <source>
    </source>
</evidence>
<evidence type="ECO:0000269" key="29">
    <source>
    </source>
</evidence>
<evidence type="ECO:0000269" key="30">
    <source>
    </source>
</evidence>
<evidence type="ECO:0000269" key="31">
    <source>
    </source>
</evidence>
<evidence type="ECO:0000269" key="32">
    <source>
    </source>
</evidence>
<evidence type="ECO:0000269" key="33">
    <source>
    </source>
</evidence>
<evidence type="ECO:0000269" key="34">
    <source>
    </source>
</evidence>
<evidence type="ECO:0000269" key="35">
    <source>
    </source>
</evidence>
<evidence type="ECO:0000269" key="36">
    <source>
    </source>
</evidence>
<evidence type="ECO:0000269" key="37">
    <source>
    </source>
</evidence>
<evidence type="ECO:0000269" key="38">
    <source>
    </source>
</evidence>
<evidence type="ECO:0000269" key="39">
    <source>
    </source>
</evidence>
<evidence type="ECO:0000269" key="40">
    <source>
    </source>
</evidence>
<evidence type="ECO:0000269" key="41">
    <source>
    </source>
</evidence>
<evidence type="ECO:0000269" key="42">
    <source>
    </source>
</evidence>
<evidence type="ECO:0000269" key="43">
    <source>
    </source>
</evidence>
<evidence type="ECO:0000269" key="44">
    <source>
    </source>
</evidence>
<evidence type="ECO:0000269" key="45">
    <source>
    </source>
</evidence>
<evidence type="ECO:0000269" key="46">
    <source>
    </source>
</evidence>
<evidence type="ECO:0000269" key="47">
    <source>
    </source>
</evidence>
<evidence type="ECO:0000269" key="48">
    <source>
    </source>
</evidence>
<evidence type="ECO:0000269" key="49">
    <source>
    </source>
</evidence>
<evidence type="ECO:0000269" key="50">
    <source>
    </source>
</evidence>
<evidence type="ECO:0000269" key="51">
    <source>
    </source>
</evidence>
<evidence type="ECO:0000269" key="52">
    <source>
    </source>
</evidence>
<evidence type="ECO:0000269" key="53">
    <source>
    </source>
</evidence>
<evidence type="ECO:0000269" key="54">
    <source>
    </source>
</evidence>
<evidence type="ECO:0000269" key="55">
    <source>
    </source>
</evidence>
<evidence type="ECO:0000269" key="56">
    <source>
    </source>
</evidence>
<evidence type="ECO:0000269" key="57">
    <source>
    </source>
</evidence>
<evidence type="ECO:0000269" key="58">
    <source>
    </source>
</evidence>
<evidence type="ECO:0000269" key="59">
    <source>
    </source>
</evidence>
<evidence type="ECO:0000303" key="60">
    <source>
    </source>
</evidence>
<evidence type="ECO:0000305" key="61"/>
<evidence type="ECO:0007829" key="62">
    <source>
        <dbReference type="PDB" id="2L6W"/>
    </source>
</evidence>
<evidence type="ECO:0007829" key="63">
    <source>
        <dbReference type="PDB" id="3MJG"/>
    </source>
</evidence>
<gene>
    <name type="primary">PDGFRB</name>
    <name type="synonym">PDGFR</name>
    <name type="synonym">PDGFR1</name>
</gene>
<dbReference type="EC" id="2.7.10.1"/>
<dbReference type="EMBL" id="J03278">
    <property type="protein sequence ID" value="AAA60049.1"/>
    <property type="molecule type" value="mRNA"/>
</dbReference>
<dbReference type="EMBL" id="M21616">
    <property type="protein sequence ID" value="AAA36427.1"/>
    <property type="molecule type" value="mRNA"/>
</dbReference>
<dbReference type="EMBL" id="EU826595">
    <property type="protein sequence ID" value="ACF47631.1"/>
    <property type="molecule type" value="mRNA"/>
</dbReference>
<dbReference type="EMBL" id="AC005895">
    <property type="status" value="NOT_ANNOTATED_CDS"/>
    <property type="molecule type" value="Genomic_DNA"/>
</dbReference>
<dbReference type="EMBL" id="AC011382">
    <property type="status" value="NOT_ANNOTATED_CDS"/>
    <property type="molecule type" value="Genomic_DNA"/>
</dbReference>
<dbReference type="EMBL" id="BC032224">
    <property type="protein sequence ID" value="AAH32224.1"/>
    <property type="molecule type" value="mRNA"/>
</dbReference>
<dbReference type="EMBL" id="U33172">
    <property type="protein sequence ID" value="AAC51675.1"/>
    <property type="molecule type" value="Genomic_DNA"/>
</dbReference>
<dbReference type="CCDS" id="CCDS4303.1">
    <molecule id="P09619-1"/>
</dbReference>
<dbReference type="PIR" id="A28206">
    <property type="entry name" value="PFHUGB"/>
</dbReference>
<dbReference type="RefSeq" id="NP_002600.1">
    <molecule id="P09619-1"/>
    <property type="nucleotide sequence ID" value="NM_002609.4"/>
</dbReference>
<dbReference type="RefSeq" id="XP_011535960.1">
    <property type="nucleotide sequence ID" value="XM_011537658.1"/>
</dbReference>
<dbReference type="RefSeq" id="XP_011535961.1">
    <property type="nucleotide sequence ID" value="XM_011537659.1"/>
</dbReference>
<dbReference type="PDB" id="1GQ5">
    <property type="method" value="X-ray"/>
    <property type="resolution" value="2.20 A"/>
    <property type="chains" value="A=1102-1106"/>
</dbReference>
<dbReference type="PDB" id="1H9O">
    <property type="method" value="X-ray"/>
    <property type="resolution" value="1.79 A"/>
    <property type="chains" value="B=751-755"/>
</dbReference>
<dbReference type="PDB" id="1SHA">
    <property type="method" value="X-ray"/>
    <property type="resolution" value="1.50 A"/>
    <property type="chains" value="B=751-755"/>
</dbReference>
<dbReference type="PDB" id="2IUI">
    <property type="method" value="X-ray"/>
    <property type="resolution" value="2.40 A"/>
    <property type="chains" value="C/D=748-758"/>
</dbReference>
<dbReference type="PDB" id="2L6W">
    <property type="method" value="NMR"/>
    <property type="chains" value="A/B=526-563"/>
</dbReference>
<dbReference type="PDB" id="2PLD">
    <property type="method" value="NMR"/>
    <property type="chains" value="B=1018-1029"/>
</dbReference>
<dbReference type="PDB" id="2PLE">
    <property type="method" value="NMR"/>
    <property type="chains" value="B=1018-1029"/>
</dbReference>
<dbReference type="PDB" id="3MJG">
    <property type="method" value="X-ray"/>
    <property type="resolution" value="2.30 A"/>
    <property type="chains" value="X/Y=33-314"/>
</dbReference>
<dbReference type="PDBsum" id="1GQ5"/>
<dbReference type="PDBsum" id="1H9O"/>
<dbReference type="PDBsum" id="1SHA"/>
<dbReference type="PDBsum" id="2IUI"/>
<dbReference type="PDBsum" id="2L6W"/>
<dbReference type="PDBsum" id="2PLD"/>
<dbReference type="PDBsum" id="2PLE"/>
<dbReference type="PDBsum" id="3MJG"/>
<dbReference type="BMRB" id="P09619"/>
<dbReference type="EMDB" id="EMD-6426"/>
<dbReference type="SMR" id="P09619"/>
<dbReference type="BioGRID" id="111185">
    <property type="interactions" value="208"/>
</dbReference>
<dbReference type="ComplexPortal" id="CPX-2882">
    <property type="entry name" value="PDGF receptor beta - PDGF-BB complex"/>
</dbReference>
<dbReference type="ComplexPortal" id="CPX-2883">
    <property type="entry name" value="PDGF receptor alpha-beta - PDGF-BB complex"/>
</dbReference>
<dbReference type="ComplexPortal" id="CPX-2886">
    <property type="entry name" value="PDGF receptor beta - PDGF-AB complex"/>
</dbReference>
<dbReference type="ComplexPortal" id="CPX-2888">
    <property type="entry name" value="PDGF receptor alpha-beta - PDGF-CC complex"/>
</dbReference>
<dbReference type="ComplexPortal" id="CPX-2889">
    <property type="entry name" value="PDGF receptor beta - PDGF-DD complex"/>
</dbReference>
<dbReference type="ComplexPortal" id="CPX-2890">
    <property type="entry name" value="PDGF receptor alpha-beta - PDGF-DD complex"/>
</dbReference>
<dbReference type="ComplexPortal" id="CPX-2891">
    <property type="entry name" value="PDGF receptor beta - PDGF-CC complex"/>
</dbReference>
<dbReference type="ComplexPortal" id="CPX-2892">
    <property type="entry name" value="PDGF receptor alpha-beta - PDGF-AB complex"/>
</dbReference>
<dbReference type="CORUM" id="P09619"/>
<dbReference type="DIP" id="DIP-558N"/>
<dbReference type="FunCoup" id="P09619">
    <property type="interactions" value="1764"/>
</dbReference>
<dbReference type="IntAct" id="P09619">
    <property type="interactions" value="295"/>
</dbReference>
<dbReference type="MINT" id="P09619"/>
<dbReference type="STRING" id="9606.ENSP00000261799"/>
<dbReference type="BindingDB" id="P09619"/>
<dbReference type="ChEMBL" id="CHEMBL1913"/>
<dbReference type="DrugBank" id="DB00102">
    <property type="generic name" value="Becaplermin"/>
</dbReference>
<dbReference type="DrugBank" id="DB01254">
    <property type="generic name" value="Dasatinib"/>
</dbReference>
<dbReference type="DrugBank" id="DB12147">
    <property type="generic name" value="Erdafitinib"/>
</dbReference>
<dbReference type="DrugBank" id="DB11741">
    <property type="generic name" value="Famitinib"/>
</dbReference>
<dbReference type="DrugBank" id="DB10770">
    <property type="generic name" value="Foreskin fibroblast (neonatal)"/>
</dbReference>
<dbReference type="DrugBank" id="DB12010">
    <property type="generic name" value="Fostamatinib"/>
</dbReference>
<dbReference type="DrugBank" id="DB00619">
    <property type="generic name" value="Imatinib"/>
</dbReference>
<dbReference type="DrugBank" id="DB11845">
    <property type="generic name" value="Lucitanib"/>
</dbReference>
<dbReference type="DrugBank" id="DB06595">
    <property type="generic name" value="Midostaurin"/>
</dbReference>
<dbReference type="DrugBank" id="DB09079">
    <property type="generic name" value="Nintedanib"/>
</dbReference>
<dbReference type="DrugBank" id="DB06589">
    <property type="generic name" value="Pazopanib"/>
</dbReference>
<dbReference type="DrugBank" id="DB08339">
    <property type="generic name" value="PD-166326"/>
</dbReference>
<dbReference type="DrugBank" id="DB17041">
    <property type="generic name" value="PD-173952"/>
</dbReference>
<dbReference type="DrugBank" id="DB02567">
    <property type="generic name" value="PD173955"/>
</dbReference>
<dbReference type="DrugBank" id="DB12978">
    <property type="generic name" value="Pexidartinib"/>
</dbReference>
<dbReference type="DrugBank" id="DB09221">
    <property type="generic name" value="Polaprezinc"/>
</dbReference>
<dbReference type="DrugBank" id="DB15822">
    <property type="generic name" value="Pralsetinib"/>
</dbReference>
<dbReference type="DrugBank" id="DB08896">
    <property type="generic name" value="Regorafenib"/>
</dbReference>
<dbReference type="DrugBank" id="DB14840">
    <property type="generic name" value="Ripretinib"/>
</dbReference>
<dbReference type="DrugBank" id="DB06436">
    <property type="generic name" value="Semaxanib"/>
</dbReference>
<dbReference type="DrugBank" id="DB00398">
    <property type="generic name" value="Sorafenib"/>
</dbReference>
<dbReference type="DrugBank" id="DB08009">
    <property type="generic name" value="SU-11652"/>
</dbReference>
<dbReference type="DrugBank" id="DB01268">
    <property type="generic name" value="Sunitinib"/>
</dbReference>
<dbReference type="DrugBank" id="DB13093">
    <property type="generic name" value="TAK-593"/>
</dbReference>
<dbReference type="DrugBank" id="DB11800">
    <property type="generic name" value="Tivozanib"/>
</dbReference>
<dbReference type="DrugBank" id="DB09283">
    <property type="generic name" value="Trapidil"/>
</dbReference>
<dbReference type="DrugBank" id="DB05146">
    <property type="generic name" value="XL820"/>
</dbReference>
<dbReference type="DrugBank" id="DB05014">
    <property type="generic name" value="XL999"/>
</dbReference>
<dbReference type="DrugCentral" id="P09619"/>
<dbReference type="GuidetoPHARMACOLOGY" id="1804"/>
<dbReference type="TCDB" id="8.A.23.1.37">
    <property type="family name" value="the basigin (basigin) family"/>
</dbReference>
<dbReference type="GlyConnect" id="1967">
    <property type="glycosylation" value="4 N-Linked glycans (3 sites)"/>
</dbReference>
<dbReference type="GlyCosmos" id="P09619">
    <property type="glycosylation" value="11 sites, 4 glycans"/>
</dbReference>
<dbReference type="GlyGen" id="P09619">
    <property type="glycosylation" value="13 sites, 4 N-linked glycans (3 sites), 1 O-linked glycan (1 site)"/>
</dbReference>
<dbReference type="iPTMnet" id="P09619"/>
<dbReference type="PhosphoSitePlus" id="P09619"/>
<dbReference type="BioMuta" id="PDGFRB"/>
<dbReference type="DMDM" id="129890"/>
<dbReference type="CPTAC" id="CPTAC-1630"/>
<dbReference type="CPTAC" id="CPTAC-3063"/>
<dbReference type="jPOST" id="P09619"/>
<dbReference type="MassIVE" id="P09619"/>
<dbReference type="PaxDb" id="9606-ENSP00000261799"/>
<dbReference type="PeptideAtlas" id="P09619"/>
<dbReference type="ProteomicsDB" id="52253">
    <molecule id="P09619-1"/>
</dbReference>
<dbReference type="Pumba" id="P09619"/>
<dbReference type="ABCD" id="P09619">
    <property type="antibodies" value="7 sequenced antibodies"/>
</dbReference>
<dbReference type="Antibodypedia" id="3424">
    <property type="antibodies" value="2237 antibodies from 48 providers"/>
</dbReference>
<dbReference type="DNASU" id="5159"/>
<dbReference type="Ensembl" id="ENST00000261799.9">
    <molecule id="P09619-1"/>
    <property type="protein sequence ID" value="ENSP00000261799.4"/>
    <property type="gene ID" value="ENSG00000113721.14"/>
</dbReference>
<dbReference type="GeneID" id="5159"/>
<dbReference type="KEGG" id="hsa:5159"/>
<dbReference type="MANE-Select" id="ENST00000261799.9">
    <property type="protein sequence ID" value="ENSP00000261799.4"/>
    <property type="RefSeq nucleotide sequence ID" value="NM_002609.4"/>
    <property type="RefSeq protein sequence ID" value="NP_002600.1"/>
</dbReference>
<dbReference type="UCSC" id="uc003lro.4">
    <molecule id="P09619-1"/>
    <property type="organism name" value="human"/>
</dbReference>
<dbReference type="AGR" id="HGNC:8804"/>
<dbReference type="CTD" id="5159"/>
<dbReference type="DisGeNET" id="5159"/>
<dbReference type="GeneCards" id="PDGFRB"/>
<dbReference type="GeneReviews" id="PDGFRB"/>
<dbReference type="HGNC" id="HGNC:8804">
    <property type="gene designation" value="PDGFRB"/>
</dbReference>
<dbReference type="HPA" id="ENSG00000113721">
    <property type="expression patterns" value="Low tissue specificity"/>
</dbReference>
<dbReference type="MalaCards" id="PDGFRB"/>
<dbReference type="MIM" id="131440">
    <property type="type" value="phenotype"/>
</dbReference>
<dbReference type="MIM" id="173410">
    <property type="type" value="gene"/>
</dbReference>
<dbReference type="MIM" id="228550">
    <property type="type" value="phenotype"/>
</dbReference>
<dbReference type="MIM" id="601626">
    <property type="type" value="phenotype"/>
</dbReference>
<dbReference type="MIM" id="601812">
    <property type="type" value="phenotype"/>
</dbReference>
<dbReference type="MIM" id="607785">
    <property type="type" value="phenotype"/>
</dbReference>
<dbReference type="MIM" id="615007">
    <property type="type" value="phenotype"/>
</dbReference>
<dbReference type="MIM" id="616592">
    <property type="type" value="phenotype"/>
</dbReference>
<dbReference type="MIM" id="621091">
    <property type="type" value="phenotype"/>
</dbReference>
<dbReference type="neXtProt" id="NX_P09619"/>
<dbReference type="OpenTargets" id="ENSG00000113721"/>
<dbReference type="Orphanet" id="363665">
    <property type="disease" value="Acroosteolysis-keloid-like lesions-premature aging syndrome"/>
</dbReference>
<dbReference type="Orphanet" id="1980">
    <property type="disease" value="Bilateral striopallidodentate calcinosis"/>
</dbReference>
<dbReference type="Orphanet" id="86830">
    <property type="disease" value="Chronic myeloproliferative disease, unclassifiable"/>
</dbReference>
<dbReference type="Orphanet" id="2591">
    <property type="disease" value="Infantile myofibromatosis"/>
</dbReference>
<dbReference type="Orphanet" id="477831">
    <property type="disease" value="Kosaki overgrowth syndrome"/>
</dbReference>
<dbReference type="Orphanet" id="168950">
    <property type="disease" value="Myeloid/lymphoid neoplasm associated with PDGFRB rearrangement"/>
</dbReference>
<dbReference type="Orphanet" id="314950">
    <property type="disease" value="Primary hypereosinophilic syndrome"/>
</dbReference>
<dbReference type="PharmGKB" id="PA33148"/>
<dbReference type="VEuPathDB" id="HostDB:ENSG00000113721"/>
<dbReference type="eggNOG" id="KOG0200">
    <property type="taxonomic scope" value="Eukaryota"/>
</dbReference>
<dbReference type="GeneTree" id="ENSGT00940000157138"/>
<dbReference type="HOGENOM" id="CLU_000288_49_0_1"/>
<dbReference type="InParanoid" id="P09619"/>
<dbReference type="OMA" id="WPEDQEF"/>
<dbReference type="OrthoDB" id="9936425at2759"/>
<dbReference type="PAN-GO" id="P09619">
    <property type="GO annotations" value="10 GO annotations based on evolutionary models"/>
</dbReference>
<dbReference type="PhylomeDB" id="P09619"/>
<dbReference type="TreeFam" id="TF325768"/>
<dbReference type="BRENDA" id="2.7.10.1">
    <property type="organism ID" value="2681"/>
</dbReference>
<dbReference type="PathwayCommons" id="P09619"/>
<dbReference type="Reactome" id="R-HSA-1257604">
    <property type="pathway name" value="PIP3 activates AKT signaling"/>
</dbReference>
<dbReference type="Reactome" id="R-HSA-186763">
    <property type="pathway name" value="Downstream signal transduction"/>
</dbReference>
<dbReference type="Reactome" id="R-HSA-186797">
    <property type="pathway name" value="Signaling by PDGF"/>
</dbReference>
<dbReference type="Reactome" id="R-HSA-2219530">
    <property type="pathway name" value="Constitutive Signaling by Aberrant PI3K in Cancer"/>
</dbReference>
<dbReference type="Reactome" id="R-HSA-5673001">
    <property type="pathway name" value="RAF/MAP kinase cascade"/>
</dbReference>
<dbReference type="Reactome" id="R-HSA-6811558">
    <property type="pathway name" value="PI5P, PP2A and IER3 Regulate PI3K/AKT Signaling"/>
</dbReference>
<dbReference type="SignaLink" id="P09619"/>
<dbReference type="SIGNOR" id="P09619"/>
<dbReference type="BioGRID-ORCS" id="5159">
    <property type="hits" value="18 hits in 1194 CRISPR screens"/>
</dbReference>
<dbReference type="CD-CODE" id="91857CE7">
    <property type="entry name" value="Nucleolus"/>
</dbReference>
<dbReference type="ChiTaRS" id="PDGFRB">
    <property type="organism name" value="human"/>
</dbReference>
<dbReference type="EvolutionaryTrace" id="P09619"/>
<dbReference type="GeneWiki" id="PDGFRB"/>
<dbReference type="GenomeRNAi" id="5159"/>
<dbReference type="Pharos" id="P09619">
    <property type="development level" value="Tclin"/>
</dbReference>
<dbReference type="PRO" id="PR:P09619"/>
<dbReference type="Proteomes" id="UP000005640">
    <property type="component" value="Chromosome 5"/>
</dbReference>
<dbReference type="RNAct" id="P09619">
    <property type="molecule type" value="protein"/>
</dbReference>
<dbReference type="Bgee" id="ENSG00000113721">
    <property type="expression patterns" value="Expressed in stromal cell of endometrium and 182 other cell types or tissues"/>
</dbReference>
<dbReference type="ExpressionAtlas" id="P09619">
    <property type="expression patterns" value="baseline and differential"/>
</dbReference>
<dbReference type="GO" id="GO:0016324">
    <property type="term" value="C:apical plasma membrane"/>
    <property type="evidence" value="ECO:0000250"/>
    <property type="project" value="UniProtKB"/>
</dbReference>
<dbReference type="GO" id="GO:0005737">
    <property type="term" value="C:cytoplasm"/>
    <property type="evidence" value="ECO:0000250"/>
    <property type="project" value="UniProtKB"/>
</dbReference>
<dbReference type="GO" id="GO:0031410">
    <property type="term" value="C:cytoplasmic vesicle"/>
    <property type="evidence" value="ECO:0007669"/>
    <property type="project" value="UniProtKB-KW"/>
</dbReference>
<dbReference type="GO" id="GO:0005925">
    <property type="term" value="C:focal adhesion"/>
    <property type="evidence" value="ECO:0007005"/>
    <property type="project" value="UniProtKB"/>
</dbReference>
<dbReference type="GO" id="GO:0005794">
    <property type="term" value="C:Golgi apparatus"/>
    <property type="evidence" value="ECO:0000314"/>
    <property type="project" value="HPA"/>
</dbReference>
<dbReference type="GO" id="GO:0043231">
    <property type="term" value="C:intracellular membrane-bounded organelle"/>
    <property type="evidence" value="ECO:0000314"/>
    <property type="project" value="HPA"/>
</dbReference>
<dbReference type="GO" id="GO:0043202">
    <property type="term" value="C:lysosomal lumen"/>
    <property type="evidence" value="ECO:0007669"/>
    <property type="project" value="UniProtKB-SubCell"/>
</dbReference>
<dbReference type="GO" id="GO:0016020">
    <property type="term" value="C:membrane"/>
    <property type="evidence" value="ECO:0000314"/>
    <property type="project" value="BHF-UCL"/>
</dbReference>
<dbReference type="GO" id="GO:0005634">
    <property type="term" value="C:nucleus"/>
    <property type="evidence" value="ECO:0000250"/>
    <property type="project" value="UniProtKB"/>
</dbReference>
<dbReference type="GO" id="GO:0005886">
    <property type="term" value="C:plasma membrane"/>
    <property type="evidence" value="ECO:0000314"/>
    <property type="project" value="UniProtKB"/>
</dbReference>
<dbReference type="GO" id="GO:0043235">
    <property type="term" value="C:receptor complex"/>
    <property type="evidence" value="ECO:0000318"/>
    <property type="project" value="GO_Central"/>
</dbReference>
<dbReference type="GO" id="GO:0005524">
    <property type="term" value="F:ATP binding"/>
    <property type="evidence" value="ECO:0007669"/>
    <property type="project" value="UniProtKB-KW"/>
</dbReference>
<dbReference type="GO" id="GO:0019899">
    <property type="term" value="F:enzyme binding"/>
    <property type="evidence" value="ECO:0000353"/>
    <property type="project" value="BHF-UCL"/>
</dbReference>
<dbReference type="GO" id="GO:0005096">
    <property type="term" value="F:GTPase activator activity"/>
    <property type="evidence" value="ECO:0000315"/>
    <property type="project" value="UniProtKB"/>
</dbReference>
<dbReference type="GO" id="GO:0160185">
    <property type="term" value="F:phospholipase C activator activity"/>
    <property type="evidence" value="ECO:0000315"/>
    <property type="project" value="UniProtKB"/>
</dbReference>
<dbReference type="GO" id="GO:0004992">
    <property type="term" value="F:platelet activating factor receptor activity"/>
    <property type="evidence" value="ECO:0000304"/>
    <property type="project" value="ProtInc"/>
</dbReference>
<dbReference type="GO" id="GO:0005019">
    <property type="term" value="F:platelet-derived growth factor beta-receptor activity"/>
    <property type="evidence" value="ECO:0000314"/>
    <property type="project" value="UniProtKB"/>
</dbReference>
<dbReference type="GO" id="GO:0048407">
    <property type="term" value="F:platelet-derived growth factor binding"/>
    <property type="evidence" value="ECO:0000314"/>
    <property type="project" value="UniProtKB"/>
</dbReference>
<dbReference type="GO" id="GO:0005017">
    <property type="term" value="F:platelet-derived growth factor receptor activity"/>
    <property type="evidence" value="ECO:0000304"/>
    <property type="project" value="ProtInc"/>
</dbReference>
<dbReference type="GO" id="GO:0005161">
    <property type="term" value="F:platelet-derived growth factor receptor binding"/>
    <property type="evidence" value="ECO:0000353"/>
    <property type="project" value="BHF-UCL"/>
</dbReference>
<dbReference type="GO" id="GO:0004672">
    <property type="term" value="F:protein kinase activity"/>
    <property type="evidence" value="ECO:0000314"/>
    <property type="project" value="UniProtKB"/>
</dbReference>
<dbReference type="GO" id="GO:0019901">
    <property type="term" value="F:protein kinase binding"/>
    <property type="evidence" value="ECO:0000353"/>
    <property type="project" value="UniProtKB"/>
</dbReference>
<dbReference type="GO" id="GO:0004713">
    <property type="term" value="F:protein tyrosine kinase activity"/>
    <property type="evidence" value="ECO:0000314"/>
    <property type="project" value="UniProtKB"/>
</dbReference>
<dbReference type="GO" id="GO:0005102">
    <property type="term" value="F:signaling receptor binding"/>
    <property type="evidence" value="ECO:0000353"/>
    <property type="project" value="UniProtKB"/>
</dbReference>
<dbReference type="GO" id="GO:0038085">
    <property type="term" value="F:vascular endothelial growth factor binding"/>
    <property type="evidence" value="ECO:0000353"/>
    <property type="project" value="BHF-UCL"/>
</dbReference>
<dbReference type="GO" id="GO:0001525">
    <property type="term" value="P:angiogenesis"/>
    <property type="evidence" value="ECO:0000318"/>
    <property type="project" value="GO_Central"/>
</dbReference>
<dbReference type="GO" id="GO:0035909">
    <property type="term" value="P:aorta morphogenesis"/>
    <property type="evidence" value="ECO:0000250"/>
    <property type="project" value="BHF-UCL"/>
</dbReference>
<dbReference type="GO" id="GO:0055003">
    <property type="term" value="P:cardiac myofibril assembly"/>
    <property type="evidence" value="ECO:0000250"/>
    <property type="project" value="UniProtKB"/>
</dbReference>
<dbReference type="GO" id="GO:0060326">
    <property type="term" value="P:cell chemotaxis"/>
    <property type="evidence" value="ECO:0000314"/>
    <property type="project" value="UniProtKB"/>
</dbReference>
<dbReference type="GO" id="GO:0060981">
    <property type="term" value="P:cell migration involved in coronary angiogenesis"/>
    <property type="evidence" value="ECO:0000250"/>
    <property type="project" value="UniProtKB"/>
</dbReference>
<dbReference type="GO" id="GO:0035441">
    <property type="term" value="P:cell migration involved in vasculogenesis"/>
    <property type="evidence" value="ECO:0000250"/>
    <property type="project" value="UniProtKB"/>
</dbReference>
<dbReference type="GO" id="GO:0007169">
    <property type="term" value="P:cell surface receptor protein tyrosine kinase signaling pathway"/>
    <property type="evidence" value="ECO:0000318"/>
    <property type="project" value="GO_Central"/>
</dbReference>
<dbReference type="GO" id="GO:0072277">
    <property type="term" value="P:metanephric glomerular capillary formation"/>
    <property type="evidence" value="ECO:0000250"/>
    <property type="project" value="UniProtKB"/>
</dbReference>
<dbReference type="GO" id="GO:0072262">
    <property type="term" value="P:metanephric glomerular mesangial cell proliferation involved in metanephros development"/>
    <property type="evidence" value="ECO:0000250"/>
    <property type="project" value="UniProtKB"/>
</dbReference>
<dbReference type="GO" id="GO:0018108">
    <property type="term" value="P:peptidyl-tyrosine phosphorylation"/>
    <property type="evidence" value="ECO:0000314"/>
    <property type="project" value="UniProtKB"/>
</dbReference>
<dbReference type="GO" id="GO:0048008">
    <property type="term" value="P:platelet-derived growth factor receptor signaling pathway"/>
    <property type="evidence" value="ECO:0000314"/>
    <property type="project" value="UniProtKB"/>
</dbReference>
<dbReference type="GO" id="GO:0035791">
    <property type="term" value="P:platelet-derived growth factor receptor-beta signaling pathway"/>
    <property type="evidence" value="ECO:0000315"/>
    <property type="project" value="UniProtKB"/>
</dbReference>
<dbReference type="GO" id="GO:0090280">
    <property type="term" value="P:positive regulation of calcium ion import"/>
    <property type="evidence" value="ECO:0000250"/>
    <property type="project" value="UniProtKB"/>
</dbReference>
<dbReference type="GO" id="GO:0050850">
    <property type="term" value="P:positive regulation of calcium-mediated signaling"/>
    <property type="evidence" value="ECO:0000315"/>
    <property type="project" value="UniProtKB"/>
</dbReference>
<dbReference type="GO" id="GO:0030335">
    <property type="term" value="P:positive regulation of cell migration"/>
    <property type="evidence" value="ECO:0000314"/>
    <property type="project" value="BHF-UCL"/>
</dbReference>
<dbReference type="GO" id="GO:0008284">
    <property type="term" value="P:positive regulation of cell population proliferation"/>
    <property type="evidence" value="ECO:0000315"/>
    <property type="project" value="UniProtKB"/>
</dbReference>
<dbReference type="GO" id="GO:0038091">
    <property type="term" value="P:positive regulation of cell proliferation by VEGF-activated platelet derived growth factor receptor signaling pathway"/>
    <property type="evidence" value="ECO:0000314"/>
    <property type="project" value="BHF-UCL"/>
</dbReference>
<dbReference type="GO" id="GO:0050921">
    <property type="term" value="P:positive regulation of chemotaxis"/>
    <property type="evidence" value="ECO:0000250"/>
    <property type="project" value="UniProtKB"/>
</dbReference>
<dbReference type="GO" id="GO:2000573">
    <property type="term" value="P:positive regulation of DNA biosynthetic process"/>
    <property type="evidence" value="ECO:0000250"/>
    <property type="project" value="UniProtKB"/>
</dbReference>
<dbReference type="GO" id="GO:0070374">
    <property type="term" value="P:positive regulation of ERK1 and ERK2 cascade"/>
    <property type="evidence" value="ECO:0000315"/>
    <property type="project" value="UniProtKB"/>
</dbReference>
<dbReference type="GO" id="GO:0043406">
    <property type="term" value="P:positive regulation of MAP kinase activity"/>
    <property type="evidence" value="ECO:0000250"/>
    <property type="project" value="UniProtKB"/>
</dbReference>
<dbReference type="GO" id="GO:0035793">
    <property type="term" value="P:positive regulation of metanephric mesenchymal cell migration by platelet-derived growth factor receptor-beta signaling pathway"/>
    <property type="evidence" value="ECO:0000250"/>
    <property type="project" value="UniProtKB"/>
</dbReference>
<dbReference type="GO" id="GO:0045840">
    <property type="term" value="P:positive regulation of mitotic nuclear division"/>
    <property type="evidence" value="ECO:0000250"/>
    <property type="project" value="UniProtKB"/>
</dbReference>
<dbReference type="GO" id="GO:0051897">
    <property type="term" value="P:positive regulation of phosphatidylinositol 3-kinase/protein kinase B signal transduction"/>
    <property type="evidence" value="ECO:0000314"/>
    <property type="project" value="UniProtKB"/>
</dbReference>
<dbReference type="GO" id="GO:2000379">
    <property type="term" value="P:positive regulation of reactive oxygen species metabolic process"/>
    <property type="evidence" value="ECO:0000250"/>
    <property type="project" value="UniProtKB"/>
</dbReference>
<dbReference type="GO" id="GO:0014911">
    <property type="term" value="P:positive regulation of smooth muscle cell migration"/>
    <property type="evidence" value="ECO:0000315"/>
    <property type="project" value="UniProtKB"/>
</dbReference>
<dbReference type="GO" id="GO:0048661">
    <property type="term" value="P:positive regulation of smooth muscle cell proliferation"/>
    <property type="evidence" value="ECO:0000315"/>
    <property type="project" value="UniProtKB"/>
</dbReference>
<dbReference type="GO" id="GO:0046777">
    <property type="term" value="P:protein autophosphorylation"/>
    <property type="evidence" value="ECO:0000314"/>
    <property type="project" value="UniProtKB"/>
</dbReference>
<dbReference type="GO" id="GO:0032956">
    <property type="term" value="P:regulation of actin cytoskeleton organization"/>
    <property type="evidence" value="ECO:0000250"/>
    <property type="project" value="BHF-UCL"/>
</dbReference>
<dbReference type="GO" id="GO:0061298">
    <property type="term" value="P:retina vasculature development in camera-type eye"/>
    <property type="evidence" value="ECO:0000250"/>
    <property type="project" value="UniProtKB"/>
</dbReference>
<dbReference type="GO" id="GO:0007165">
    <property type="term" value="P:signal transduction"/>
    <property type="evidence" value="ECO:0000314"/>
    <property type="project" value="UniProtKB"/>
</dbReference>
<dbReference type="GO" id="GO:0014805">
    <property type="term" value="P:smooth muscle adaptation"/>
    <property type="evidence" value="ECO:0000303"/>
    <property type="project" value="BHF-UCL"/>
</dbReference>
<dbReference type="GO" id="GO:0071670">
    <property type="term" value="P:smooth muscle cell chemotaxis"/>
    <property type="evidence" value="ECO:0000250"/>
    <property type="project" value="BHF-UCL"/>
</dbReference>
<dbReference type="CDD" id="cd00096">
    <property type="entry name" value="Ig"/>
    <property type="match status" value="1"/>
</dbReference>
<dbReference type="CDD" id="cd05859">
    <property type="entry name" value="Ig4_PDGFR"/>
    <property type="match status" value="1"/>
</dbReference>
<dbReference type="CDD" id="cd05861">
    <property type="entry name" value="IgI_PDGFR-alphabeta"/>
    <property type="match status" value="1"/>
</dbReference>
<dbReference type="CDD" id="cd05107">
    <property type="entry name" value="PTKc_PDGFR_beta"/>
    <property type="match status" value="1"/>
</dbReference>
<dbReference type="FunFam" id="3.30.200.20:FF:000025">
    <property type="entry name" value="Platelet-derived growth factor receptor alpha"/>
    <property type="match status" value="1"/>
</dbReference>
<dbReference type="FunFam" id="1.10.510.10:FF:000140">
    <property type="entry name" value="Platelet-derived growth factor receptor beta"/>
    <property type="match status" value="1"/>
</dbReference>
<dbReference type="FunFam" id="2.60.40.10:FF:000223">
    <property type="entry name" value="Platelet-derived growth factor receptor beta"/>
    <property type="match status" value="1"/>
</dbReference>
<dbReference type="FunFam" id="2.60.40.10:FF:000572">
    <property type="entry name" value="Platelet-derived growth factor receptor beta"/>
    <property type="match status" value="1"/>
</dbReference>
<dbReference type="FunFam" id="2.60.40.10:FF:000715">
    <property type="entry name" value="Platelet-derived growth factor receptor beta"/>
    <property type="match status" value="1"/>
</dbReference>
<dbReference type="FunFam" id="2.60.40.10:FF:000814">
    <property type="entry name" value="Platelet-derived growth factor receptor beta"/>
    <property type="match status" value="1"/>
</dbReference>
<dbReference type="FunFam" id="2.60.40.10:FF:000982">
    <property type="entry name" value="Platelet-derived growth factor receptor beta"/>
    <property type="match status" value="1"/>
</dbReference>
<dbReference type="Gene3D" id="2.60.40.10">
    <property type="entry name" value="Immunoglobulins"/>
    <property type="match status" value="5"/>
</dbReference>
<dbReference type="Gene3D" id="3.30.200.20">
    <property type="entry name" value="Phosphorylase Kinase, domain 1"/>
    <property type="match status" value="1"/>
</dbReference>
<dbReference type="Gene3D" id="1.10.510.10">
    <property type="entry name" value="Transferase(Phosphotransferase) domain 1"/>
    <property type="match status" value="1"/>
</dbReference>
<dbReference type="InterPro" id="IPR007110">
    <property type="entry name" value="Ig-like_dom"/>
</dbReference>
<dbReference type="InterPro" id="IPR036179">
    <property type="entry name" value="Ig-like_dom_sf"/>
</dbReference>
<dbReference type="InterPro" id="IPR013783">
    <property type="entry name" value="Ig-like_fold"/>
</dbReference>
<dbReference type="InterPro" id="IPR003599">
    <property type="entry name" value="Ig_sub"/>
</dbReference>
<dbReference type="InterPro" id="IPR003598">
    <property type="entry name" value="Ig_sub2"/>
</dbReference>
<dbReference type="InterPro" id="IPR013151">
    <property type="entry name" value="Immunoglobulin_dom"/>
</dbReference>
<dbReference type="InterPro" id="IPR011009">
    <property type="entry name" value="Kinase-like_dom_sf"/>
</dbReference>
<dbReference type="InterPro" id="IPR027288">
    <property type="entry name" value="PGFRB"/>
</dbReference>
<dbReference type="InterPro" id="IPR000719">
    <property type="entry name" value="Prot_kinase_dom"/>
</dbReference>
<dbReference type="InterPro" id="IPR017441">
    <property type="entry name" value="Protein_kinase_ATP_BS"/>
</dbReference>
<dbReference type="InterPro" id="IPR050122">
    <property type="entry name" value="RTK"/>
</dbReference>
<dbReference type="InterPro" id="IPR001245">
    <property type="entry name" value="Ser-Thr/Tyr_kinase_cat_dom"/>
</dbReference>
<dbReference type="InterPro" id="IPR008266">
    <property type="entry name" value="Tyr_kinase_AS"/>
</dbReference>
<dbReference type="InterPro" id="IPR020635">
    <property type="entry name" value="Tyr_kinase_cat_dom"/>
</dbReference>
<dbReference type="InterPro" id="IPR001824">
    <property type="entry name" value="Tyr_kinase_rcpt_3_CS"/>
</dbReference>
<dbReference type="PANTHER" id="PTHR24416:SF53">
    <property type="entry name" value="PLATELET-DERIVED GROWTH FACTOR RECEPTOR BETA"/>
    <property type="match status" value="1"/>
</dbReference>
<dbReference type="PANTHER" id="PTHR24416">
    <property type="entry name" value="TYROSINE-PROTEIN KINASE RECEPTOR"/>
    <property type="match status" value="1"/>
</dbReference>
<dbReference type="Pfam" id="PF00047">
    <property type="entry name" value="ig"/>
    <property type="match status" value="1"/>
</dbReference>
<dbReference type="Pfam" id="PF13927">
    <property type="entry name" value="Ig_3"/>
    <property type="match status" value="1"/>
</dbReference>
<dbReference type="Pfam" id="PF25305">
    <property type="entry name" value="Ig_PDGFR_d4"/>
    <property type="match status" value="1"/>
</dbReference>
<dbReference type="Pfam" id="PF07714">
    <property type="entry name" value="PK_Tyr_Ser-Thr"/>
    <property type="match status" value="1"/>
</dbReference>
<dbReference type="PIRSF" id="PIRSF500948">
    <property type="entry name" value="Beta-PDGF_receptor"/>
    <property type="match status" value="1"/>
</dbReference>
<dbReference type="PIRSF" id="PIRSF000615">
    <property type="entry name" value="TyrPK_CSF1-R"/>
    <property type="match status" value="1"/>
</dbReference>
<dbReference type="PRINTS" id="PR01832">
    <property type="entry name" value="VEGFRECEPTOR"/>
</dbReference>
<dbReference type="SMART" id="SM00409">
    <property type="entry name" value="IG"/>
    <property type="match status" value="3"/>
</dbReference>
<dbReference type="SMART" id="SM00408">
    <property type="entry name" value="IGc2"/>
    <property type="match status" value="3"/>
</dbReference>
<dbReference type="SMART" id="SM00219">
    <property type="entry name" value="TyrKc"/>
    <property type="match status" value="1"/>
</dbReference>
<dbReference type="SUPFAM" id="SSF48726">
    <property type="entry name" value="Immunoglobulin"/>
    <property type="match status" value="3"/>
</dbReference>
<dbReference type="SUPFAM" id="SSF56112">
    <property type="entry name" value="Protein kinase-like (PK-like)"/>
    <property type="match status" value="1"/>
</dbReference>
<dbReference type="PROSITE" id="PS50835">
    <property type="entry name" value="IG_LIKE"/>
    <property type="match status" value="2"/>
</dbReference>
<dbReference type="PROSITE" id="PS00107">
    <property type="entry name" value="PROTEIN_KINASE_ATP"/>
    <property type="match status" value="1"/>
</dbReference>
<dbReference type="PROSITE" id="PS50011">
    <property type="entry name" value="PROTEIN_KINASE_DOM"/>
    <property type="match status" value="1"/>
</dbReference>
<dbReference type="PROSITE" id="PS00109">
    <property type="entry name" value="PROTEIN_KINASE_TYR"/>
    <property type="match status" value="1"/>
</dbReference>
<dbReference type="PROSITE" id="PS00240">
    <property type="entry name" value="RECEPTOR_TYR_KIN_III"/>
    <property type="match status" value="1"/>
</dbReference>
<keyword id="KW-0002">3D-structure</keyword>
<keyword id="KW-0025">Alternative splicing</keyword>
<keyword id="KW-0067">ATP-binding</keyword>
<keyword id="KW-1003">Cell membrane</keyword>
<keyword id="KW-0145">Chemotaxis</keyword>
<keyword id="KW-0160">Chromosomal rearrangement</keyword>
<keyword id="KW-0968">Cytoplasmic vesicle</keyword>
<keyword id="KW-0217">Developmental protein</keyword>
<keyword id="KW-0903">Direct protein sequencing</keyword>
<keyword id="KW-0225">Disease variant</keyword>
<keyword id="KW-1015">Disulfide bond</keyword>
<keyword id="KW-0325">Glycoprotein</keyword>
<keyword id="KW-0393">Immunoglobulin domain</keyword>
<keyword id="KW-0418">Kinase</keyword>
<keyword id="KW-0458">Lysosome</keyword>
<keyword id="KW-0472">Membrane</keyword>
<keyword id="KW-0547">Nucleotide-binding</keyword>
<keyword id="KW-0597">Phosphoprotein</keyword>
<keyword id="KW-1267">Proteomics identification</keyword>
<keyword id="KW-0656">Proto-oncogene</keyword>
<keyword id="KW-0675">Receptor</keyword>
<keyword id="KW-1185">Reference proteome</keyword>
<keyword id="KW-0677">Repeat</keyword>
<keyword id="KW-0732">Signal</keyword>
<keyword id="KW-0808">Transferase</keyword>
<keyword id="KW-0812">Transmembrane</keyword>
<keyword id="KW-1133">Transmembrane helix</keyword>
<keyword id="KW-0829">Tyrosine-protein kinase</keyword>
<keyword id="KW-0832">Ubl conjugation</keyword>
<reference key="1">
    <citation type="journal article" date="1988" name="Proc. Natl. Acad. Sci. U.S.A.">
        <title>Cloning and expression of a cDNA coding for the human platelet-derived growth factor receptor: evidence for more than one receptor class.</title>
        <authorList>
            <person name="Gronwald R.G.K."/>
            <person name="Grant F.J."/>
            <person name="Haldeman B.A."/>
            <person name="Hart C.E."/>
            <person name="O'Hara P.J."/>
            <person name="Hagen F.S."/>
            <person name="Ross R."/>
            <person name="Bowen-Pope D.F."/>
            <person name="Murray M.J."/>
        </authorList>
    </citation>
    <scope>NUCLEOTIDE SEQUENCE [MRNA] (ISOFORM 1)</scope>
    <scope>FUNCTION AS PDGFB RECEPTOR</scope>
    <scope>SUBCELLULAR LOCATION</scope>
    <scope>AUTOPHOSPHORYLATION</scope>
    <scope>INTERACTION WITH PDGFB</scope>
</reference>
<reference key="2">
    <citation type="journal article" date="1988" name="Mol. Cell. Biol.">
        <title>cDNA cloning and expression of a human platelet-derived growth factor (PDGF) receptor specific for B-chain-containing PDGF molecules.</title>
        <authorList>
            <person name="Claesson-Welsh L."/>
            <person name="Eriksson A."/>
            <person name="Moren A."/>
            <person name="Severinsson L."/>
            <person name="Ek B."/>
            <person name="Oestman A."/>
            <person name="Betsholtz C."/>
            <person name="Heldin C.-H."/>
        </authorList>
    </citation>
    <scope>NUCLEOTIDE SEQUENCE [MRNA] (ISOFORM 1)</scope>
    <scope>FUNCTION AS PDGFB RECEPTOR</scope>
    <scope>SUBCELLULAR LOCATION</scope>
    <scope>GLYCOSYLATION</scope>
    <scope>AUTOPHOSPHORYLATION</scope>
    <scope>INTERACTION WITH PDGFA AND PDGFB</scope>
</reference>
<reference key="3">
    <citation type="journal article" date="2008" name="Arthritis Res. Ther.">
        <title>Novel splice variants derived from the receptor tyrosine kinase superfamily are potential therapeutics for rheumatoid arthritis.</title>
        <authorList>
            <person name="Jin P."/>
            <person name="Zhang J."/>
            <person name="Sumariwalla P.F."/>
            <person name="Ni I."/>
            <person name="Jorgensen B."/>
            <person name="Crawford D."/>
            <person name="Phillips S."/>
            <person name="Feldmann M."/>
            <person name="Shepard H.M."/>
            <person name="Paleolog E.M."/>
        </authorList>
    </citation>
    <scope>NUCLEOTIDE SEQUENCE [MRNA] (ISOFORM 2)</scope>
    <scope>ALTERNATIVE SPLICING</scope>
</reference>
<reference key="4">
    <citation type="journal article" date="2004" name="Nature">
        <title>The DNA sequence and comparative analysis of human chromosome 5.</title>
        <authorList>
            <person name="Schmutz J."/>
            <person name="Martin J."/>
            <person name="Terry A."/>
            <person name="Couronne O."/>
            <person name="Grimwood J."/>
            <person name="Lowry S."/>
            <person name="Gordon L.A."/>
            <person name="Scott D."/>
            <person name="Xie G."/>
            <person name="Huang W."/>
            <person name="Hellsten U."/>
            <person name="Tran-Gyamfi M."/>
            <person name="She X."/>
            <person name="Prabhakar S."/>
            <person name="Aerts A."/>
            <person name="Altherr M."/>
            <person name="Bajorek E."/>
            <person name="Black S."/>
            <person name="Branscomb E."/>
            <person name="Caoile C."/>
            <person name="Challacombe J.F."/>
            <person name="Chan Y.M."/>
            <person name="Denys M."/>
            <person name="Detter J.C."/>
            <person name="Escobar J."/>
            <person name="Flowers D."/>
            <person name="Fotopulos D."/>
            <person name="Glavina T."/>
            <person name="Gomez M."/>
            <person name="Gonzales E."/>
            <person name="Goodstein D."/>
            <person name="Grigoriev I."/>
            <person name="Groza M."/>
            <person name="Hammon N."/>
            <person name="Hawkins T."/>
            <person name="Haydu L."/>
            <person name="Israni S."/>
            <person name="Jett J."/>
            <person name="Kadner K."/>
            <person name="Kimball H."/>
            <person name="Kobayashi A."/>
            <person name="Lopez F."/>
            <person name="Lou Y."/>
            <person name="Martinez D."/>
            <person name="Medina C."/>
            <person name="Morgan J."/>
            <person name="Nandkeshwar R."/>
            <person name="Noonan J.P."/>
            <person name="Pitluck S."/>
            <person name="Pollard M."/>
            <person name="Predki P."/>
            <person name="Priest J."/>
            <person name="Ramirez L."/>
            <person name="Retterer J."/>
            <person name="Rodriguez A."/>
            <person name="Rogers S."/>
            <person name="Salamov A."/>
            <person name="Salazar A."/>
            <person name="Thayer N."/>
            <person name="Tice H."/>
            <person name="Tsai M."/>
            <person name="Ustaszewska A."/>
            <person name="Vo N."/>
            <person name="Wheeler J."/>
            <person name="Wu K."/>
            <person name="Yang J."/>
            <person name="Dickson M."/>
            <person name="Cheng J.-F."/>
            <person name="Eichler E.E."/>
            <person name="Olsen A."/>
            <person name="Pennacchio L.A."/>
            <person name="Rokhsar D.S."/>
            <person name="Richardson P."/>
            <person name="Lucas S.M."/>
            <person name="Myers R.M."/>
            <person name="Rubin E.M."/>
        </authorList>
    </citation>
    <scope>NUCLEOTIDE SEQUENCE [LARGE SCALE GENOMIC DNA]</scope>
</reference>
<reference key="5">
    <citation type="journal article" date="2004" name="Genome Res.">
        <title>The status, quality, and expansion of the NIH full-length cDNA project: the Mammalian Gene Collection (MGC).</title>
        <authorList>
            <consortium name="The MGC Project Team"/>
        </authorList>
    </citation>
    <scope>NUCLEOTIDE SEQUENCE [LARGE SCALE MRNA] (ISOFORM 1)</scope>
    <scope>VARIANT PHE-180</scope>
    <source>
        <tissue>Brain</tissue>
    </source>
</reference>
<reference key="6">
    <citation type="journal article" date="1997" name="Oncogene">
        <title>Integration of proviral DNA into the PDGF beta-receptor gene in HTLV-I-infected T-cells results in a novel tyrosine kinase product with transforming activity.</title>
        <authorList>
            <person name="Chi K.D."/>
            <person name="McPhee R.A."/>
            <person name="Wagner A.S."/>
            <person name="Dietz J.J."/>
            <person name="Pantazis P."/>
            <person name="Goustin A.S."/>
        </authorList>
    </citation>
    <scope>NUCLEOTIDE SEQUENCE [GENOMIC DNA] OF 548-569</scope>
</reference>
<reference key="7">
    <citation type="journal article" date="2012" name="Genes Chromosomes Cancer">
        <title>Systematic screen for tyrosine kinase rearrangements identifies a novel C6orf204-PDGFRB fusion in a patient with recurrent T-ALL and an associated myeloproliferative neoplasm.</title>
        <authorList>
            <person name="Chmielecki J."/>
            <person name="Peifer M."/>
            <person name="Viale A."/>
            <person name="Hutchinson K."/>
            <person name="Giltnane J."/>
            <person name="Socci N.D."/>
            <person name="Hollis C.J."/>
            <person name="Dean R.S."/>
            <person name="Yenamandra A."/>
            <person name="Jagasia M."/>
            <person name="Kim A.S."/>
            <person name="Dave U.P."/>
            <person name="Thomas R.K."/>
            <person name="Pao W."/>
        </authorList>
    </citation>
    <scope>NUCLEOTIDE SEQUENCE [MRNA] OF 559-1106 (ISOFORM 1)</scope>
    <scope>CHROMOSOMAL TRANSLOCATION WITH CEP85L</scope>
</reference>
<reference key="8">
    <citation type="journal article" date="1988" name="Cell">
        <title>Tandem linkage of human CSF-1 receptor (c-fms) and PDGF receptor genes.</title>
        <authorList>
            <person name="Roberts W.M."/>
            <person name="Look A.T."/>
            <person name="Roussel M.F."/>
            <person name="Sherr C.J."/>
        </authorList>
    </citation>
    <scope>NUCLEOTIDE SEQUENCE [GENOMIC DNA] OF 1046-1106</scope>
</reference>
<reference key="9">
    <citation type="journal article" date="2004" name="Protein Sci.">
        <title>Signal peptide prediction based on analysis of experimentally verified cleavage sites.</title>
        <authorList>
            <person name="Zhang Z."/>
            <person name="Henzel W.J."/>
        </authorList>
    </citation>
    <scope>PROTEIN SEQUENCE OF 33-47</scope>
</reference>
<reference key="10">
    <citation type="journal article" date="1989" name="Cell">
        <title>Autophosphorylation of the PDGF receptor in the kinase insert region regulates interactions with cell proteins.</title>
        <authorList>
            <person name="Kazlauskas A."/>
            <person name="Cooper J.A."/>
        </authorList>
    </citation>
    <scope>PHOSPHORYLATION AT TYR-751 AND TYR-857</scope>
</reference>
<reference key="11">
    <citation type="journal article" date="1989" name="Proc. Natl. Acad. Sci. U.S.A.">
        <title>Independent expression of human alpha or beta platelet-derived growth factor receptor cDNAs in a naive hematopoietic cell leads to functional coupling with mitogenic and chemotactic signaling pathways.</title>
        <authorList>
            <person name="Matsui T."/>
            <person name="Pierce J.H."/>
            <person name="Fleming T.P."/>
            <person name="Greenberger J.S."/>
            <person name="LaRochelle W.J."/>
            <person name="Ruggiero M."/>
            <person name="Aaronson S.A."/>
        </authorList>
    </citation>
    <scope>FUNCTION AS PDGFB RECEPTOR IN CELL PROLIFERATION AND CHEMOTAXIS</scope>
    <scope>SUBCELLULAR LOCATION</scope>
</reference>
<reference key="12">
    <citation type="journal article" date="1991" name="Cell Regul.">
        <title>Functions of the major tyrosine phosphorylation site of the PDGF receptor beta subunit.</title>
        <authorList>
            <person name="Kazlauskas A."/>
            <person name="Durden D.L."/>
            <person name="Cooper J.A."/>
        </authorList>
    </citation>
    <scope>FUNCTION IN CELL PROLIFERATION; ACTIVATION OF PLCG1 AND IN PHOSPHORYLATION OF PLCG1 AND RASA1/GAP</scope>
    <scope>MUTAGENESIS OF TYR-751 AND TYR-857</scope>
</reference>
<reference key="13">
    <citation type="journal article" date="1991" name="J. Biol. Chem.">
        <title>Platelet-derived growth factor (PDGF) stimulates PDGF receptor subunit dimerization and intersubunit trans-phosphorylation.</title>
        <authorList>
            <person name="Kelly J.D."/>
            <person name="Haldeman B.A."/>
            <person name="Grant F.J."/>
            <person name="Murray M.J."/>
            <person name="Seifert R.A."/>
            <person name="Bowen-Pope D.F."/>
            <person name="Cooper J.A."/>
            <person name="Kazlauskas A."/>
        </authorList>
    </citation>
    <scope>INTERACTION WITH PDGFRA; PDGFA AND PDGFB</scope>
    <scope>FUNCTION AS RECEPTOR FOR PDGFA AND PDGFB</scope>
    <scope>PHOSPHORYLATION AT TYR-857 AND TYR-751</scope>
</reference>
<reference key="14">
    <citation type="journal article" date="1991" name="J. Cell Biol.">
        <title>Effect of receptor kinase inactivation on the rate of internalization and degradation of PDGF and the PDGF beta-receptor.</title>
        <authorList>
            <person name="Sorkin A."/>
            <person name="Westermark B."/>
            <person name="Heldin C.H."/>
            <person name="Claesson-Welsh L."/>
        </authorList>
    </citation>
    <scope>FUNCTION AS RECEPTOR FOR PDGFA AND PDGFB</scope>
    <scope>SUBCELLULAR LOCATION</scope>
    <scope>CATALYTIC ACTIVITY</scope>
    <scope>MUTAGENESIS OF LYS-634</scope>
</reference>
<reference key="15">
    <citation type="journal article" date="1992" name="EMBO J.">
        <title>Phosphorylation sites in the PDGF receptor with different specificities for binding GAP and PI3 kinase in vivo.</title>
        <authorList>
            <person name="Kashishian A."/>
            <person name="Kazlauskas A."/>
            <person name="Cooper J.A."/>
        </authorList>
    </citation>
    <scope>FUNCTION IN ACTIVATION OF PHOSPHATIDYLINOSITOL 3-KINASE ACTIVITY</scope>
    <scope>INTERACTION WITH PIK3R1 AND RASA1</scope>
    <scope>PHOSPHORYLATION AT TYR-740; TYR-751; TYR-771 AND TYR-857</scope>
    <scope>MUTAGENESIS OF LYS-634; TYR-716; TYR-740; TYR-751; TYR-763; TYR-771; TYR-775; TYR-778 AND TYR-857</scope>
</reference>
<reference key="16">
    <citation type="journal article" date="1992" name="EMBO J.">
        <title>Identification of two C-terminal autophosphorylation sites in the PDGF beta-receptor: involvement in the interaction with phospholipase C-gamma.</title>
        <authorList>
            <person name="Ronnstrand L."/>
            <person name="Mori S."/>
            <person name="Arridsson A.K."/>
            <person name="Eriksson A."/>
            <person name="Wernstedt C."/>
            <person name="Hellman U."/>
            <person name="Claesson-Welsh L."/>
            <person name="Heldin C.H."/>
        </authorList>
    </citation>
    <scope>FUNCTION AS PDGFB RECEPTOR IN CELL PROLIFERATION AND PHOSPHORYLATION OF PLCG1</scope>
    <scope>INTERACTION WITH PLCG1</scope>
    <scope>PHOSPHORYLATION AT TYR-1009 AND TYR-1021</scope>
    <scope>MUTAGENESIS OF TYR-1009 AND TYR-1021</scope>
</reference>
<reference key="17">
    <citation type="journal article" date="1992" name="J. Biol. Chem.">
        <title>Ligand-induced polyubiquitination of the platelet-derived growth factor beta-receptor.</title>
        <authorList>
            <person name="Mori S."/>
            <person name="Heldin C.H."/>
            <person name="Claesson-Welsh L."/>
        </authorList>
    </citation>
    <scope>UBIQUITINATION</scope>
    <scope>DEGRADATION</scope>
</reference>
<reference key="18">
    <citation type="journal article" date="1992" name="Mol. Cell. Biol.">
        <title>GTPase-activating protein and phosphatidylinositol 3-kinase bind to distinct regions of the platelet-derived growth factor receptor beta subunit.</title>
        <authorList>
            <person name="Kazlauskas A."/>
            <person name="Kashishian A."/>
            <person name="Cooper J.A."/>
            <person name="Valius M."/>
        </authorList>
    </citation>
    <scope>INTERACTION WITH PIK3R1 AND RASA1</scope>
    <scope>MUTAGENESIS OF TYR-740; TYR-751 AND TYR-771</scope>
</reference>
<reference key="19">
    <citation type="journal article" date="1993" name="EMBO J.">
        <title>Identification of two juxtamembrane autophosphorylation sites in the PDGF beta-receptor; involvement in the interaction with Src family tyrosine kinases.</title>
        <authorList>
            <person name="Mori S."/>
            <person name="Ronnstrand L."/>
            <person name="Yokote K."/>
            <person name="Engstrom A."/>
            <person name="Courtneidge S.A."/>
            <person name="Claesson-Welsh L."/>
            <person name="Heldin C.H."/>
        </authorList>
    </citation>
    <scope>FUNCTION AS PDGFB RECEPTOR IN CELL PROLIFERATION</scope>
    <scope>PHOSPHORYLATION AT TYR-579 AND TYR-581; INTERACTION WITH SRC</scope>
    <scope>CATALYTIC ACTIVITY</scope>
    <scope>MUTAGENESIS OF TYR-579 AND TYR-581</scope>
</reference>
<reference key="20">
    <citation type="journal article" date="1993" name="J. Biol. Chem.">
        <title>Mechanism of platelet-derived growth factor (PDGF) AA, AB, and BB binding to alpha and beta PDGF receptor.</title>
        <authorList>
            <person name="Fretto L.J."/>
            <person name="Snape A.J."/>
            <person name="Tomlinson J.E."/>
            <person name="Seroogy J.J."/>
            <person name="Wolf D.L."/>
            <person name="LaRochelle W.J."/>
            <person name="Giese N.A."/>
        </authorList>
    </citation>
    <scope>INTERACTION WITH DGFA AND PDGFB</scope>
</reference>
<reference key="21">
    <citation type="journal article" date="1993" name="J. Biol. Chem.">
        <title>Activation of the SH2-containing phosphotyrosine phosphatase SH-PTP2 by its binding site, phosphotyrosine 1009, on the human platelet-derived growth factor receptor.</title>
        <authorList>
            <person name="Lechleider R.J."/>
            <person name="Sugimoto S."/>
            <person name="Bennett A.M."/>
            <person name="Kashishian A.S."/>
            <person name="Cooper J.A."/>
            <person name="Shoelson S.E."/>
            <person name="Walsh C.T."/>
            <person name="Neel B.G."/>
        </authorList>
    </citation>
    <scope>FUNCTION IN PHOSPHORYLATION AND ACTIVATION OF PTPN11</scope>
    <scope>INTERACTION WITH PTPN11; PIK3R1; PLCG1 AND RASA1</scope>
    <scope>MUTAGENESIS OF TYR-1009</scope>
</reference>
<reference key="22">
    <citation type="journal article" date="1993" name="Mol. Cell. Biol.">
        <title>Two signaling molecules share a phosphotyrosine-containing binding site in the platelet-derived growth factor receptor.</title>
        <authorList>
            <person name="Nishimura R."/>
            <person name="Li W."/>
            <person name="Kashishian A."/>
            <person name="Mondino A."/>
            <person name="Zhou M."/>
            <person name="Cooper J."/>
            <person name="Schlessinger J."/>
        </authorList>
    </citation>
    <scope>INTERACTION WITH NCK1 AND PIK3R1</scope>
    <scope>FUNCTION IN PHOSPHORYLATION OF NCK1</scope>
    <scope>MUTAGENESIS OF TYR-751</scope>
</reference>
<reference key="23">
    <citation type="journal article" date="1994" name="Oncogene">
        <title>Shb is a ubiquitously expressed Src homology 2 protein.</title>
        <authorList>
            <person name="Welsh M."/>
            <person name="Mares J."/>
            <person name="Karlsson T."/>
            <person name="Lavergne C."/>
            <person name="Breant B."/>
            <person name="Claesson-Welsh L."/>
        </authorList>
    </citation>
    <scope>INTERACTION WITH SHB</scope>
</reference>
<reference key="24">
    <citation type="journal article" date="1996" name="J. Biol. Chem.">
        <title>Grb7 is a downstream signaling component of platelet-derived growth factor alpha- and beta-receptors.</title>
        <authorList>
            <person name="Yokote K."/>
            <person name="Margolis B."/>
            <person name="Heldin C.H."/>
            <person name="Claesson-Welsh L."/>
        </authorList>
    </citation>
    <scope>INTERACTION WITH GRB7</scope>
</reference>
<reference key="25">
    <citation type="journal article" date="1997" name="Blood">
        <title>Fusion of the platelet-derived growth factor receptor beta to a novel gene CEV14 in acute myelogenous leukemia after clonal evolution.</title>
        <authorList>
            <person name="Abe A."/>
            <person name="Emi N."/>
            <person name="Tanimoto M."/>
            <person name="Terasaki H."/>
            <person name="Marunouchi T."/>
            <person name="Saito H."/>
        </authorList>
    </citation>
    <scope>CHROMOSOMAL TRANSLOCATION WITH TRIP11</scope>
</reference>
<reference key="26">
    <citation type="journal article" date="1999" name="Mol. Cell. Biol.">
        <title>Grb10, a positive, stimulatory signaling adapter in platelet-derived growth factor BB-, insulin-like growth factor I-, and insulin-mediated mitogenesis.</title>
        <authorList>
            <person name="Wang J."/>
            <person name="Dai H."/>
            <person name="Yousaf N."/>
            <person name="Moussaif M."/>
            <person name="Deng Y."/>
            <person name="Boufelliga A."/>
            <person name="Swamy O.R."/>
            <person name="Leone M.E."/>
            <person name="Riedel H."/>
        </authorList>
    </citation>
    <scope>INTERACTION WITH GRB10</scope>
    <scope>MUTAGENESIS OF TYR-579; TYR-581; TYR-716; TYR-740; TYR-751; TYR-771; TYR-857; TYR-1009 AND TYR-1021</scope>
</reference>
<reference key="27">
    <citation type="journal article" date="1999" name="Oncogene">
        <title>APS, an adaptor protein containing PH and SH2 domains, is associated with the PDGF receptor and c-Cbl and inhibits PDGF-induced mitogenesis.</title>
        <authorList>
            <person name="Yokouchi M."/>
            <person name="Wakioka T."/>
            <person name="Sakamoto H."/>
            <person name="Yasukawa H."/>
            <person name="Ohtsuka S."/>
            <person name="Sasaki A."/>
            <person name="Ohtsubo M."/>
            <person name="Valius M."/>
            <person name="Inoue A."/>
            <person name="Komiya S."/>
            <person name="Yoshimura A."/>
        </authorList>
    </citation>
    <scope>INTERACTION WITH SH2B2/APS</scope>
</reference>
<reference key="28">
    <citation type="journal article" date="2000" name="J. Biol. Chem.">
        <title>Site-selective dephosphorylation of the platelet-derived growth factor beta-receptor by the receptor-like protein-tyrosine phosphatase DEP-1.</title>
        <authorList>
            <person name="Kovalenko M."/>
            <person name="Denner K."/>
            <person name="Sandstrom J."/>
            <person name="Persson C."/>
            <person name="Gross S."/>
            <person name="Jandt E."/>
            <person name="Vilella R."/>
            <person name="Bohmer F."/>
            <person name="Ostman A."/>
        </authorList>
    </citation>
    <scope>PHOSPHORYLATION AT TYR-562; TYR-751; TYR-763; TYR-771; TYR-775; TYR-778; TYR-857; TYR-1009 AND TYR-1021</scope>
    <scope>DEPHOSPHORYLATION AT TYR-751; TYR-857; TYR-1009 AND TYR-1021 BY PTPRJ</scope>
</reference>
<reference key="29">
    <citation type="journal article" date="2000" name="Mol. Cell. Biol.">
        <title>Class II phosphoinositide 3-kinases are downstream targets of activated polypeptide growth factor receptors.</title>
        <authorList>
            <person name="Arcaro A."/>
            <person name="Zvelebil M.J."/>
            <person name="Wallasch C."/>
            <person name="Ullrich A."/>
            <person name="Waterfield M.D."/>
            <person name="Domin J."/>
        </authorList>
    </citation>
    <scope>INTERACTION WITH PIK3C2B</scope>
</reference>
<reference key="30">
    <citation type="journal article" date="2001" name="J. Biol. Chem.">
        <title>Platelet-derived growth factor C (PDGF-C), a novel growth factor that binds to PDGF alpha and beta receptor.</title>
        <authorList>
            <person name="Gilbertson D.G."/>
            <person name="Duff M.E."/>
            <person name="West J.W."/>
            <person name="Kelly J.D."/>
            <person name="Sheppard P.O."/>
            <person name="Hofstrand P.D."/>
            <person name="Gao Z."/>
            <person name="Shoemaker K."/>
            <person name="Bukowski T.R."/>
            <person name="Moore M."/>
            <person name="Feldhaus A.L."/>
            <person name="Humes J.M."/>
            <person name="Palmer T.E."/>
            <person name="Hart C.E."/>
        </authorList>
    </citation>
    <scope>FUNCTION AS A RECEPTOR FOR PDGFC</scope>
    <scope>INTERACTION WITH PDGFC</scope>
</reference>
<reference key="31">
    <citation type="journal article" date="2001" name="Nat. Cell Biol.">
        <title>PDGF-D is a specific, protease-activated ligand for the PDGF beta-receptor.</title>
        <authorList>
            <person name="Bergsten E."/>
            <person name="Uutela M."/>
            <person name="Li X."/>
            <person name="Pietras K."/>
            <person name="Oestman A."/>
            <person name="Heldin C.-H."/>
            <person name="Alitalo K."/>
            <person name="Eriksson U."/>
        </authorList>
    </citation>
    <scope>FUNCTION AS A RECEPTOR FOR PDGFD</scope>
</reference>
<reference key="32">
    <citation type="journal article" date="2002" name="N. Engl. J. Med.">
        <title>Response to imatinib mesylate in patients with chronic myeloproliferative diseases with rearrangements of the platelet-derived growth factor receptor beta.</title>
        <authorList>
            <person name="Apperley J.F."/>
            <person name="Gardembas M."/>
            <person name="Melo J.V."/>
            <person name="Russell-Jones R."/>
            <person name="Bain B.J."/>
            <person name="Baxter E.J."/>
            <person name="Chase A."/>
            <person name="Chessells J.M."/>
            <person name="Colombat M."/>
            <person name="Dearden C.E."/>
            <person name="Dimitrijevic S."/>
            <person name="Mahon F.-X."/>
            <person name="Marin D."/>
            <person name="Nikolova Z."/>
            <person name="Olavarria E."/>
            <person name="Silberman S."/>
            <person name="Schultheis B."/>
            <person name="Cross N.C.P."/>
            <person name="Goldman J.M."/>
        </authorList>
    </citation>
    <scope>CHROMOSOMAL TRANSLOCATION WITH ETV6</scope>
</reference>
<reference key="33">
    <citation type="journal article" date="2003" name="Blood">
        <title>Cloning of the t(1;5)(q23;q33) in a myeloproliferative disorder associated with eosinophilia: involvement of PDGFRB and response to imatinib.</title>
        <authorList>
            <person name="Wilkinson K."/>
            <person name="Velloso E.R.P."/>
            <person name="Lopes L.F."/>
            <person name="Lee C."/>
            <person name="Aster J.C."/>
            <person name="Shipp M.A."/>
            <person name="Aguiar R.C.T."/>
        </authorList>
    </citation>
    <scope>CHROMOSOMAL TRANSLOCATION WITH PDE4DIP</scope>
</reference>
<reference key="34">
    <citation type="journal article" date="2004" name="Cancer Res.">
        <title>HCMOGT-1 is a novel fusion partner to PDGFRB in juvenile myelomonocytic leukemia with t(5;17)(q33;p11.2).</title>
        <authorList>
            <person name="Morerio C."/>
            <person name="Acquila M."/>
            <person name="Rosanda C."/>
            <person name="Rapella A."/>
            <person name="Dufour C."/>
            <person name="Locatelli F."/>
            <person name="Maserati E."/>
            <person name="Pasquali F."/>
            <person name="Panarello C."/>
        </authorList>
    </citation>
    <scope>CHROMOSOMAL TRANSLOCATION WITH SPECC1</scope>
</reference>
<reference key="35">
    <citation type="journal article" date="2004" name="Cancer Res.">
        <title>p53-Binding protein 1 is fused to the platelet-derived growth factor receptor beta in a patient with a t(5;15)(q33;q22) and an imatinib-responsive eosinophilic myeloproliferative disorder.</title>
        <authorList>
            <person name="Grand F.H."/>
            <person name="Burgstaller S."/>
            <person name="Kuhr T."/>
            <person name="Baxter E.J."/>
            <person name="Webersinke G."/>
            <person name="Thaler J."/>
            <person name="Chase A.J."/>
            <person name="Cross N.C."/>
        </authorList>
    </citation>
    <scope>CHROMOSOMAL TRANSLOCATION WITH TP53BP1</scope>
    <scope>ACTIVITY REGULATION</scope>
</reference>
<reference key="36">
    <citation type="journal article" date="2004" name="Mol. Cell. Biol.">
        <title>Site-selective regulation of platelet-derived growth factor beta receptor tyrosine phosphorylation by T-cell protein tyrosine phosphatase.</title>
        <authorList>
            <person name="Persson C."/>
            <person name="Saevenhed C."/>
            <person name="Bourdeau A."/>
            <person name="Tremblay M.L."/>
            <person name="Markova B."/>
            <person name="Boehmer F.D."/>
            <person name="Haj F.G."/>
            <person name="Neel B.G."/>
            <person name="Elson A."/>
            <person name="Heldin C.H."/>
            <person name="Roennstrand L."/>
            <person name="Ostman A."/>
            <person name="Hellberg C."/>
        </authorList>
    </citation>
    <scope>PHOSPHORYLATION AT TYR-579; TYR-751; TYR-771 AND TYR-1021</scope>
    <scope>DEPHOSPHORYLATION AT TYR-579 AND TYR-1021 BY PTPN2</scope>
</reference>
<reference key="37">
    <citation type="journal article" date="2005" name="Nature">
        <title>Regulation of PDGF signalling and vascular remodelling by peroxiredoxin II.</title>
        <authorList>
            <person name="Choi M.H."/>
            <person name="Lee I.K."/>
            <person name="Kim G.W."/>
            <person name="Kim B.U."/>
            <person name="Han Y.H."/>
            <person name="Yu D.Y."/>
            <person name="Park H.S."/>
            <person name="Kim K.Y."/>
            <person name="Lee J.S."/>
            <person name="Choi C."/>
            <person name="Bae Y.S."/>
            <person name="Lee B.I."/>
            <person name="Rhee S.G."/>
            <person name="Kang S.W."/>
        </authorList>
    </citation>
    <scope>PHOSPHORYLATION AT TYR-579; TYR-581; TYR-716; TYR-740; TYR-771; TYR-857; TYR-1009 AND TYR-1021</scope>
</reference>
<reference key="38">
    <citation type="journal article" date="2007" name="J. Biol. Chem.">
        <title>Binding of Cbl to a phospholipase Cgamma1-docking site on platelet-derived growth factor receptor beta provides a dual mechanism of negative regulation.</title>
        <authorList>
            <person name="Reddi A.L."/>
            <person name="Ying G."/>
            <person name="Duan L."/>
            <person name="Chen G."/>
            <person name="Dimri M."/>
            <person name="Douillard P."/>
            <person name="Druker B.J."/>
            <person name="Naramura M."/>
            <person name="Band V."/>
            <person name="Band H."/>
        </authorList>
    </citation>
    <scope>INTERACTION WITH CBL</scope>
    <scope>SUBCELLULAR LOCATION</scope>
    <scope>MUTAGENESIS OF TYR-1021</scope>
    <scope>UBIQUITINATION</scope>
</reference>
<reference key="39">
    <citation type="journal article" date="2010" name="Cancer Res.">
        <title>A novel signaling axis of matriptase/PDGF-D/ss-PDGFR in human prostate cancer.</title>
        <authorList>
            <person name="Ustach C.V."/>
            <person name="Huang W."/>
            <person name="Conley-LaComb M.K."/>
            <person name="Lin C.Y."/>
            <person name="Che M."/>
            <person name="Abrams J."/>
            <person name="Kim H.R."/>
        </authorList>
    </citation>
    <scope>FUNCTION AS PDGFD RECEPTOR</scope>
</reference>
<reference key="40">
    <citation type="journal article" date="2010" name="Cell. Signal.">
        <title>Mutation of tyrosine residue 857 in the PDGF beta-receptor affects cell proliferation but not migration.</title>
        <authorList>
            <person name="Wardega P."/>
            <person name="Heldin C.H."/>
            <person name="Lennartsson J."/>
        </authorList>
    </citation>
    <scope>FUNCTION IN PHOSPHORYLATION OF CBL; STAM; PDCD6IP/ALIX; PLCG1 AND PTPN11</scope>
    <scope>CATALYTIC ACTIVITY</scope>
    <scope>AUTOPHOSPHORYLATION</scope>
    <scope>SUBCELLULAR LOCATION</scope>
    <scope>MUTAGENESIS OF LYS-634 AND TYR-857</scope>
</reference>
<reference key="41">
    <citation type="journal article" date="2010" name="J. Biol. Chem.">
        <title>Stimulation of platelet-derived growth factor receptor beta (PDGFRbeta) activates ADAM17 and promotes metalloproteinase-dependent cross-talk between the PDGFRbeta and epidermal growth factor receptor (EGFR) signaling pathways.</title>
        <authorList>
            <person name="Mendelson K."/>
            <person name="Swendeman S."/>
            <person name="Saftig P."/>
            <person name="Blobel C.P."/>
        </authorList>
    </citation>
    <scope>FUNCTION</scope>
</reference>
<reference key="42">
    <citation type="journal article" date="2012" name="Br. J. Nutr.">
        <title>Glyceollins inhibit platelet-derived growth factor-mediated human arterial smooth muscle cell proliferation and migration.</title>
        <authorList>
            <person name="Kim H.J."/>
            <person name="Cha B.Y."/>
            <person name="Choi B."/>
            <person name="Lim J.S."/>
            <person name="Woo J.T."/>
            <person name="Kim J.S."/>
        </authorList>
    </citation>
    <scope>FUNCTION IN SMOOTH MUSCLE CELL PROLIFERATION AND MIGRATION</scope>
</reference>
<reference key="43">
    <citation type="journal article" date="1994" name="J. Biol. Chem.">
        <title>Direct interaction between Shc and the platelet-derived growth factor beta-receptor.</title>
        <authorList>
            <person name="Yokote K."/>
            <person name="Mori S."/>
            <person name="Hansen K."/>
            <person name="McGlade J."/>
            <person name="Pawson T."/>
            <person name="Heldin C.H."/>
            <person name="Claesson-Welsh L."/>
        </authorList>
    </citation>
    <scope>INTERACTION WITH SHC1 AND GRB2</scope>
    <scope>FUNCTION IN PHOSPHORYLATION OF SHC1</scope>
</reference>
<reference key="44">
    <citation type="journal article" date="2011" name="J. Am. Coll. Cardiol.">
        <title>Disruption of platelet-derived growth factor-dependent phosphatidylinositol 3-kinase and phospholipase Cgamma 1 activity abolishes vascular smooth muscle cell proliferation and migration and attenuates neointima formation in vivo.</title>
        <authorList>
            <person name="Caglayan E."/>
            <person name="Vantler M."/>
            <person name="Leppanen O."/>
            <person name="Gerhardt F."/>
            <person name="Mustafov L."/>
            <person name="Ten Freyhaus H."/>
            <person name="Kappert K."/>
            <person name="Odenthal M."/>
            <person name="Zimmermann W.H."/>
            <person name="Tallquist M.D."/>
            <person name="Rosenkranz S."/>
        </authorList>
    </citation>
    <scope>FUNCTION IN SMOOTH MUSCLE CELL MIGRATION AND NEOINTIMA FORMATION AFTER BLOOD VESSEL INJURY</scope>
    <scope>MUTAGENESIS OF TYR-740; TYR-751 AND TYR-1021</scope>
</reference>
<reference key="45">
    <citation type="journal article" date="2015" name="Am. J. Hum. Genet.">
        <title>A point mutation in PDGFRB causes autosomal-dominant Penttinen syndrome.</title>
        <authorList>
            <person name="Johnston J.J."/>
            <person name="Sanchez-Contreras M.Y."/>
            <person name="Keppler-Noreuil K.M."/>
            <person name="Sapp J."/>
            <person name="Crenshaw M."/>
            <person name="Finch N.A."/>
            <person name="Cormier-Daire V."/>
            <person name="Rademakers R."/>
            <person name="Sybert V.P."/>
            <person name="Biesecker L.G."/>
        </authorList>
    </citation>
    <scope>INVOLVEMENT IN PENTT</scope>
    <scope>VARIANT PENTT ALA-665</scope>
    <scope>CHARACTERIZATION OF VARIANT PENTT ALA-665</scope>
</reference>
<reference key="46">
    <citation type="journal article" date="2015" name="J. Pediatr.">
        <title>Novel overgrowth syndrome phenotype due to recurrent de novo PDGFRB mutation.</title>
        <authorList>
            <person name="Takenouchi T."/>
            <person name="Yamaguchi Y."/>
            <person name="Tanikawa A."/>
            <person name="Kosaki R."/>
            <person name="Okano H."/>
            <person name="Kosaki K."/>
        </authorList>
    </citation>
    <scope>INVOLVEMENT IN KOGS</scope>
    <scope>VARIANT KOGS ARG-584</scope>
</reference>
<reference key="47">
    <citation type="journal article" date="2015" name="PLoS ONE">
        <title>Functional characterization of germline mutations in PDGFB and PDGFRB in primary familial brain calcification.</title>
        <authorList>
            <person name="Vanlandewijck M."/>
            <person name="Lebouvier T."/>
            <person name="Andaloussi Maee M."/>
            <person name="Nahar K."/>
            <person name="Hornemann S."/>
            <person name="Kenkel D."/>
            <person name="Cunha S.I."/>
            <person name="Lennartsson J."/>
            <person name="Boss A."/>
            <person name="Heldin C.H."/>
            <person name="Keller A."/>
            <person name="Betsholtz C."/>
        </authorList>
    </citation>
    <scope>CHARACTERIZATION OF VARIANTS IBGC4 PRO-658; TRP-987 AND VAL-1071</scope>
    <scope>FUNCTION</scope>
</reference>
<reference key="48">
    <citation type="journal article" date="1998" name="Biochim. Biophys. Acta">
        <title>Signal transduction via platelet-derived growth factor receptors.</title>
        <authorList>
            <person name="Heldin C.H."/>
            <person name="Ostman A."/>
            <person name="Ronnstrand L."/>
        </authorList>
    </citation>
    <scope>REVIEW ON SIGNALING AND AUTOPHOSPHORYLATION</scope>
</reference>
<reference key="49">
    <citation type="journal article" date="2004" name="Cytokine Growth Factor Rev.">
        <title>PDGF receptors-mediators of autocrine tumor growth and regulators of tumor vasculature and stroma.</title>
        <authorList>
            <person name="Ostman A."/>
        </authorList>
    </citation>
    <scope>REVIEW</scope>
</reference>
<reference key="50">
    <citation type="journal article" date="2007" name="Adv. Cancer Res.">
        <title>PDGF receptors as targets in tumor treatment.</title>
        <authorList>
            <person name="Ostman A."/>
            <person name="Heldin C.H."/>
        </authorList>
    </citation>
    <scope>REVIEW</scope>
</reference>
<reference key="51">
    <citation type="journal article" date="2008" name="Genes Dev.">
        <title>Role of platelet-derived growth factors in physiology and medicine.</title>
        <authorList>
            <person name="Andrae J."/>
            <person name="Gallini R."/>
            <person name="Betsholtz C."/>
        </authorList>
    </citation>
    <scope>REVIEW ON FUNCTION; LIGANDS; ROLE IN DEVELOPMENT AND DISEASE AND ACTIVATION OF SIGNALING PATHWAYS</scope>
</reference>
<reference key="52">
    <citation type="journal article" date="2001" name="Acta Crystallogr. D">
        <title>NMR trial models: experiences with the colicin immunity protein Im7 and the p85alpha C-terminal SH2-peptide complex.</title>
        <authorList>
            <person name="Pauptit R.A."/>
            <person name="Dennis C.A."/>
            <person name="Derbyshire D.J."/>
            <person name="Breeze A.L."/>
            <person name="Weston S.A."/>
            <person name="Rowsell S."/>
            <person name="Murshudov G.N."/>
        </authorList>
    </citation>
    <scope>X-RAY CRYSTALLOGRAPHY (1.79 ANGSTROMS) OF 751-755 IN COMPLEX WITH PIK3R1</scope>
    <scope>COMPARISON WITH NMR ANALYSIS</scope>
</reference>
<reference key="53">
    <citation type="journal article" date="2002" name="J. Biol. Chem.">
        <title>Structural determinants of the Na+/H+ exchanger regulatory factor interaction with the beta 2 adrenergic and platelet-derived growth factor receptors.</title>
        <authorList>
            <person name="Karthikeyan S."/>
            <person name="Leung T."/>
            <person name="Ladias J.A.A."/>
        </authorList>
    </citation>
    <scope>X-RAY CRYSTALLOGRAPHY (2.2 ANGSTROMS) OF 1102-1106 IN COMPLEX WITH NHERF1</scope>
    <scope>INTERACTION WITH NHERF1</scope>
</reference>
<reference key="54">
    <citation type="journal article" date="2010" name="Proc. Natl. Acad. Sci. U.S.A.">
        <title>Structures of a platelet-derived growth factor/propeptide complex and a platelet-derived growth factor/receptor complex.</title>
        <authorList>
            <person name="Shim A.H."/>
            <person name="Liu H."/>
            <person name="Focia P.J."/>
            <person name="Chen X."/>
            <person name="Lin P.C."/>
            <person name="He X."/>
        </authorList>
    </citation>
    <scope>X-RAY CRYSTALLOGRAPHY (2.3 ANGSTROMS) OF 33-314 IN COMPLEX WITH PDGFB</scope>
    <scope>SUBUNIT</scope>
    <scope>GLYCOSYLATION AT ASN-45; ASN-89; ASN-103; ASN-215; ASN-230; ASN-292 AND ASN-307</scope>
    <scope>DISULFIDE BONDS</scope>
</reference>
<reference key="55">
    <citation type="journal article" date="2007" name="Nature">
        <title>Patterns of somatic mutation in human cancer genomes.</title>
        <authorList>
            <person name="Greenman C."/>
            <person name="Stephens P."/>
            <person name="Smith R."/>
            <person name="Dalgliesh G.L."/>
            <person name="Hunter C."/>
            <person name="Bignell G."/>
            <person name="Davies H."/>
            <person name="Teague J."/>
            <person name="Butler A."/>
            <person name="Stevens C."/>
            <person name="Edkins S."/>
            <person name="O'Meara S."/>
            <person name="Vastrik I."/>
            <person name="Schmidt E.E."/>
            <person name="Avis T."/>
            <person name="Barthorpe S."/>
            <person name="Bhamra G."/>
            <person name="Buck G."/>
            <person name="Choudhury B."/>
            <person name="Clements J."/>
            <person name="Cole J."/>
            <person name="Dicks E."/>
            <person name="Forbes S."/>
            <person name="Gray K."/>
            <person name="Halliday K."/>
            <person name="Harrison R."/>
            <person name="Hills K."/>
            <person name="Hinton J."/>
            <person name="Jenkinson A."/>
            <person name="Jones D."/>
            <person name="Menzies A."/>
            <person name="Mironenko T."/>
            <person name="Perry J."/>
            <person name="Raine K."/>
            <person name="Richardson D."/>
            <person name="Shepherd R."/>
            <person name="Small A."/>
            <person name="Tofts C."/>
            <person name="Varian J."/>
            <person name="Webb T."/>
            <person name="West S."/>
            <person name="Widaa S."/>
            <person name="Yates A."/>
            <person name="Cahill D.P."/>
            <person name="Louis D.N."/>
            <person name="Goldstraw P."/>
            <person name="Nicholson A.G."/>
            <person name="Brasseur F."/>
            <person name="Looijenga L."/>
            <person name="Weber B.L."/>
            <person name="Chiew Y.-E."/>
            <person name="DeFazio A."/>
            <person name="Greaves M.F."/>
            <person name="Green A.R."/>
            <person name="Campbell P."/>
            <person name="Birney E."/>
            <person name="Easton D.F."/>
            <person name="Chenevix-Trench G."/>
            <person name="Tan M.-H."/>
            <person name="Khoo S.K."/>
            <person name="Teh B.T."/>
            <person name="Yuen S.T."/>
            <person name="Leung S.Y."/>
            <person name="Wooster R."/>
            <person name="Futreal P.A."/>
            <person name="Stratton M.R."/>
        </authorList>
    </citation>
    <scope>VARIANTS [LARGE SCALE ANALYSIS] PHE-29; LYS-282; LYS-485; HIS-589; TYR-718 AND ILE-882</scope>
</reference>
<reference key="56">
    <citation type="journal article" date="2013" name="Am. J. Hum. Genet.">
        <title>Mutations in PDGFRB cause autosomal-dominant infantile myofibromatosis.</title>
        <authorList>
            <person name="Martignetti J.A."/>
            <person name="Tian L."/>
            <person name="Li D."/>
            <person name="Ramirez M.C."/>
            <person name="Camacho-Vanegas O."/>
            <person name="Camacho S.C."/>
            <person name="Guo Y."/>
            <person name="Zand D.J."/>
            <person name="Bernstein A.M."/>
            <person name="Masur S.K."/>
            <person name="Kim C.E."/>
            <person name="Otieno F.G."/>
            <person name="Hou C."/>
            <person name="Abdel-Magid N."/>
            <person name="Tweddale B."/>
            <person name="Metry D."/>
            <person name="Fournet J.C."/>
            <person name="Papp E."/>
            <person name="McPherson E.W."/>
            <person name="Zabel C."/>
            <person name="Vaksmann G."/>
            <person name="Morisot C."/>
            <person name="Keating B."/>
            <person name="Sleiman P.M."/>
            <person name="Cleveland J.A."/>
            <person name="Everman D.B."/>
            <person name="Zackai E."/>
            <person name="Hakonarson H."/>
        </authorList>
    </citation>
    <scope>VARIANT IMF1 THR-660</scope>
    <scope>INVOLVEMENT IN IMF1</scope>
</reference>
<reference key="57">
    <citation type="journal article" date="2013" name="Am. J. Hum. Genet.">
        <title>A recurrent PDGFRB mutation causes familial infantile myofibromatosis.</title>
        <authorList>
            <person name="Cheung Y.H."/>
            <person name="Gayden T."/>
            <person name="Campeau P.M."/>
            <person name="Leduc C.A."/>
            <person name="Russo D."/>
            <person name="Nguyen V.H."/>
            <person name="Guo J."/>
            <person name="Qi M."/>
            <person name="Guan Y."/>
            <person name="Albrecht S."/>
            <person name="Moroz B."/>
            <person name="Eldin K.W."/>
            <person name="Lu J.T."/>
            <person name="Schwartzentruber J."/>
            <person name="Malkin D."/>
            <person name="Berghuis A.M."/>
            <person name="Emil S."/>
            <person name="Gibbs R.A."/>
            <person name="Burk D.L."/>
            <person name="Vanstone M."/>
            <person name="Lee B.H."/>
            <person name="Orchard D."/>
            <person name="Boycott K.M."/>
            <person name="Chung W.K."/>
            <person name="Jabado N."/>
        </authorList>
    </citation>
    <scope>VARIANT IMF1 CYS-561</scope>
    <scope>INVOLVEMENT IN IMF1</scope>
</reference>
<reference key="58">
    <citation type="journal article" date="2013" name="Brain">
        <title>Phenotypic spectrum of probable and genetically-confirmed idiopathic basal ganglia calcification.</title>
        <authorList>
            <consortium name="French IBGC Study Group"/>
            <person name="Nicolas G."/>
            <person name="Pottier C."/>
            <person name="Charbonnier C."/>
            <person name="Guyant-Marechal L."/>
            <person name="Le Ber I."/>
            <person name="Pariente J."/>
            <person name="Labauge P."/>
            <person name="Ayrignac X."/>
            <person name="Defebvre L."/>
            <person name="Maltete D."/>
            <person name="Martinaud O."/>
            <person name="Lefaucheur R."/>
            <person name="Guillin O."/>
            <person name="Wallon D."/>
            <person name="Chaumette B."/>
            <person name="Rondepierre P."/>
            <person name="Derache N."/>
            <person name="Fromager G."/>
            <person name="Schaeffer S."/>
            <person name="Krystkowiak P."/>
            <person name="Verny C."/>
            <person name="Jurici S."/>
            <person name="Sauvee M."/>
            <person name="Verin M."/>
            <person name="Lebouvier T."/>
            <person name="Rouaud O."/>
            <person name="Thauvin-Robinet C."/>
            <person name="Rousseau S."/>
            <person name="Rovelet-Lecrux A."/>
            <person name="Frebourg T."/>
            <person name="Campion D."/>
            <person name="Hannequin D."/>
        </authorList>
    </citation>
    <scope>VARIANTS IBGC4 PRO-658; TRP-987 AND VAL-1071</scope>
    <scope>INVOLVEMENT IN IBGC4</scope>
</reference>
<reference key="59">
    <citation type="journal article" date="2013" name="Neurology">
        <title>Mutation of the PDGFRB gene as a cause of idiopathic basal ganglia calcification.</title>
        <authorList>
            <person name="Nicolas G."/>
            <person name="Pottier C."/>
            <person name="Maltete D."/>
            <person name="Coutant S."/>
            <person name="Rovelet-Lecrux A."/>
            <person name="Legallic S."/>
            <person name="Rousseau S."/>
            <person name="Vaschalde Y."/>
            <person name="Guyant-Marechal L."/>
            <person name="Augustin J."/>
            <person name="Martinaud O."/>
            <person name="Defebvre L."/>
            <person name="Krystkowiak P."/>
            <person name="Pariente J."/>
            <person name="Clanet M."/>
            <person name="Labauge P."/>
            <person name="Ayrignac X."/>
            <person name="Lefaucheur R."/>
            <person name="Le Ber I."/>
            <person name="Frebourg T."/>
            <person name="Hannequin D."/>
            <person name="Campion D."/>
        </authorList>
    </citation>
    <scope>VARIANTS IBGC4 PRO-658 AND TRP-987</scope>
    <scope>INVOLVEMENT IN IBGC4</scope>
</reference>
<reference key="60">
    <citation type="journal article" date="2019" name="Eur. J. Hum. Genet.">
        <title>A tyrosine kinase-activating variant Asn666Ser in PDGFRB causes a progeria-like condition in the severe end of Penttinen syndrome.</title>
        <authorList>
            <person name="Bredrup C."/>
            <person name="Stokowy T."/>
            <person name="McGaughran J."/>
            <person name="Lee S."/>
            <person name="Sapkota D."/>
            <person name="Cristea I."/>
            <person name="Xu L."/>
            <person name="Tveit K.S."/>
            <person name="Hoevding G."/>
            <person name="Steen V.M."/>
            <person name="Roedahl E."/>
            <person name="Bruland O."/>
            <person name="Houge G."/>
        </authorList>
    </citation>
    <scope>VARIANT PENTT SER-666</scope>
    <scope>CHARACTERIZATION OF VARIANT PENTT SER-666</scope>
    <scope>INVOLVEMENT IN PENTT</scope>
</reference>
<reference key="61">
    <citation type="journal article" date="2021" name="Hum. Mol. Genet.">
        <title>Temperature-dependent autoactivation associated with clinical variability of PDGFRB Asn666 substitutions.</title>
        <authorList>
            <person name="Bredrup C."/>
            <person name="Cristea I."/>
            <person name="Safieh L.A."/>
            <person name="Di Maria E."/>
            <person name="Gjertsen B.T."/>
            <person name="Tveit K.S."/>
            <person name="Thu F."/>
            <person name="Bull N."/>
            <person name="Edward D.P."/>
            <person name="Hennekam R.C.M."/>
            <person name="Hoevding G."/>
            <person name="Haugen O.H."/>
            <person name="Houge G."/>
            <person name="Roedahl E."/>
            <person name="Bruland O."/>
        </authorList>
    </citation>
    <scope>VARIANT OPDKD TYR-666</scope>
    <scope>CHARACTERIZATION OF VARIANT OPDKD TYR-666</scope>
    <scope>INVOLVEMENT IN OPDKD</scope>
</reference>
<sequence>MRLPGAMPALALKGELLLLSLLLLLEPQISQGLVVTPPGPELVLNVSSTFVLTCSGSAPVVWERMSQEPPQEMAKAQDGTFSSVLTLTNLTGLDTGEYFCTHNDSRGLETDERKRLYIFVPDPTVGFLPNDAEELFIFLTEITEITIPCRVTDPQLVVTLHEKKGDVALPVPYDHQRGFSGIFEDRSYICKTTIGDREVDSDAYYVYRLQVSSINVSVNAVQTVVRQGENITLMCIVIGNEVVNFEWTYPRKESGRLVEPVTDFLLDMPYHIRSILHIPSAELEDSGTYTCNVTESVNDHQDEKAINITVVESGYVRLLGEVGTLQFAELHRSRTLQVVFEAYPPPTVLWFKDNRTLGDSSAGEIALSTRNVSETRYVSELTLVRVKVAEAGHYTMRAFHEDAEVQLSFQLQINVPVRVLELSESHPDSGEQTVRCRGRGMPQPNIIWSACRDLKRCPRELPPTLLGNSSEEESQLETNVTYWEEEQEFEVVSTLRLQHVDRPLSVRCTLRNAVGQDTQEVIVVPHSLPFKVVVISAILALVVLTIISLIILIMLWQKKPRYEIRWKVIESVSSDGHEYIYVDPMQLPYDSTWELPRDQLVLGRTLGSGAFGQVVEATAHGLSHSQATMKVAVKMLKSTARSSEKQALMSELKIMSHLGPHLNVVNLLGACTKGGPIYIITEYCRYGDLVDYLHRNKHTFLQHHSDKRRPPSAELYSNALPVGLPLPSHVSLTGESDGGYMDMSKDESVDYVPMLDMKGDVKYADIESSNYMAPYDNYVPSAPERTCRATLINESPVLSYMDLVGFSYQVANGMEFLASKNCVHRDLAARNVLICEGKLVKICDFGLARDIMRDSNYISKGSTFLPLKWMAPESIFNSLYTTLSDVWSFGILLWEIFTLGGTPYPELPMNEQFYNAIKRGYRMAQPAHASDEIYEIMQKCWEEKFEIRPPFSQLVLLLERLLGEGYKKKYQQVDEEFLRSDHPAILRSQARLPGFHGLRSPLDTSSVLYTAVQPNEGDNDYIIPLPDPKPEVADEGPLEGSPSLASSTLNEVNTSSTISCDSPLEPQDEPEPEPQLELQVEPEPELEQLPDSGCPAPRAEAEDSFL</sequence>
<proteinExistence type="evidence at protein level"/>
<organism>
    <name type="scientific">Homo sapiens</name>
    <name type="common">Human</name>
    <dbReference type="NCBI Taxonomy" id="9606"/>
    <lineage>
        <taxon>Eukaryota</taxon>
        <taxon>Metazoa</taxon>
        <taxon>Chordata</taxon>
        <taxon>Craniata</taxon>
        <taxon>Vertebrata</taxon>
        <taxon>Euteleostomi</taxon>
        <taxon>Mammalia</taxon>
        <taxon>Eutheria</taxon>
        <taxon>Euarchontoglires</taxon>
        <taxon>Primates</taxon>
        <taxon>Haplorrhini</taxon>
        <taxon>Catarrhini</taxon>
        <taxon>Hominidae</taxon>
        <taxon>Homo</taxon>
    </lineage>
</organism>
<comment type="function">
    <text evidence="10 11 17 19 26 27 30 31 32 34 35 36 44 46 47 48 52 53 54 55">Tyrosine-protein kinase that acts as a cell-surface receptor for homodimeric PDGFB and PDGFD and for heterodimers formed by PDGFA and PDGFB, and plays an essential role in the regulation of embryonic development, cell proliferation, survival, differentiation, chemotaxis and migration. Plays an essential role in blood vessel development by promoting proliferation, migration and recruitment of pericytes and smooth muscle cells to endothelial cells. Plays a role in the migration of vascular smooth muscle cells and the formation of neointima at vascular injury sites. Required for normal development of the cardiovascular system. Required for normal recruitment of pericytes (mesangial cells) in the kidney glomerulus, and for normal formation of a branched network of capillaries in kidney glomeruli. Promotes rearrangement of the actin cytoskeleton and the formation of membrane ruffles. Binding of its cognate ligands - homodimeric PDGFB, heterodimers formed by PDGFA and PDGFB or homodimeric PDGFD -leads to the activation of several signaling cascades; the response depends on the nature of the bound ligand and is modulated by the formation of heterodimers between PDGFRA and PDGFRB. Phosphorylates PLCG1, PIK3R1, PTPN11, RASA1/GAP, CBL, SHC1 and NCK1. Activation of PLCG1 leads to the production of the cellular signaling molecules diacylglycerol and inositol 1,4,5-trisphosphate, mobilization of cytosolic Ca(2+) and the activation of protein kinase C. Phosphorylation of PIK3R1, the regulatory subunit of phosphatidylinositol 3-kinase, leads to the activation of the AKT1 signaling pathway. Phosphorylation of SHC1, or of the C-terminus of PTPN11, creates a binding site for GRB2, resulting in the activation of HRAS, RAF1 and down-stream MAP kinases, including MAPK1/ERK2 and/or MAPK3/ERK1. Promotes phosphorylation and activation of SRC family kinases. Promotes phosphorylation of PDCD6IP/ALIX and STAM. Receptor signaling is down-regulated by protein phosphatases that dephosphorylate the receptor and its down-stream effectors, and by rapid internalization of the activated receptor.</text>
</comment>
<comment type="catalytic activity">
    <reaction evidence="5 30 31 52">
        <text>L-tyrosyl-[protein] + ATP = O-phospho-L-tyrosyl-[protein] + ADP + H(+)</text>
        <dbReference type="Rhea" id="RHEA:10596"/>
        <dbReference type="Rhea" id="RHEA-COMP:10136"/>
        <dbReference type="Rhea" id="RHEA-COMP:20101"/>
        <dbReference type="ChEBI" id="CHEBI:15378"/>
        <dbReference type="ChEBI" id="CHEBI:30616"/>
        <dbReference type="ChEBI" id="CHEBI:46858"/>
        <dbReference type="ChEBI" id="CHEBI:61978"/>
        <dbReference type="ChEBI" id="CHEBI:456216"/>
        <dbReference type="EC" id="2.7.10.1"/>
    </reaction>
</comment>
<comment type="activity regulation">
    <text evidence="24">Present in an inactive conformation in the absence of bound ligand. Binding of PDGFB and/or PDGFD leads to dimerization and activation by autophosphorylation on tyrosine residues. Inhibited by imatinib.</text>
</comment>
<comment type="subunit">
    <text evidence="7 8 10 12 13 17 18 19 27 29 33 47 48 51 53 54 55 56 57 59">Interacts with homodimeric PDGFB and PDGFD, and with heterodimers formed by PDGFA and PDGFB. May also interact with homodimeric PDGFC. Monomer in the absence of bound ligand. Interaction with homodimeric PDGFB, heterodimers formed by PDGFA and PDGFB or homodimeric PDGFD, leads to receptor dimerization, where both PDGFRA homodimers and heterodimers with PDGFRB are observed. Interacts with SH2B2/APS. Interacts directly (tyrosine phosphorylated) with SHB. Interacts (tyrosine phosphorylated) with PIK3R1 and RASA1. Interacts (tyrosine phosphorylated) with CBL. Interacts (tyrosine phosphorylated) with SRC and SRC family kinases. Interacts (tyrosine phosphorylated) with PIK3C2B, maybe indirectly. Interacts (tyrosine phosphorylated) with SHC1, GRB7, GRB10 and NCK1. Interaction with GRB2 is mediated by SHC1. Interacts (via C-terminus) with NHERF1.</text>
</comment>
<comment type="interaction">
    <interactant intactId="EBI-641237">
        <id>P09619</id>
    </interactant>
    <interactant intactId="EBI-77613">
        <id>P05067</id>
        <label>APP</label>
    </interactant>
    <organismsDiffer>false</organismsDiffer>
    <experiments>3</experiments>
</comment>
<comment type="interaction">
    <interactant intactId="EBI-641237">
        <id>P09619</id>
    </interactant>
    <interactant intactId="EBI-742887">
        <id>Q8TAP6</id>
        <label>CEP76</label>
    </interactant>
    <organismsDiffer>false</organismsDiffer>
    <experiments>3</experiments>
</comment>
<comment type="interaction">
    <interactant intactId="EBI-641237">
        <id>P09619</id>
    </interactant>
    <interactant intactId="EBI-515315">
        <id>P06241</id>
        <label>FYN</label>
    </interactant>
    <organismsDiffer>false</organismsDiffer>
    <experiments>3</experiments>
</comment>
<comment type="interaction">
    <interactant intactId="EBI-641237">
        <id>P09619</id>
    </interactant>
    <interactant intactId="EBI-970191">
        <id>Q14451</id>
        <label>GRB7</label>
    </interactant>
    <organismsDiffer>false</organismsDiffer>
    <experiments>4</experiments>
</comment>
<comment type="interaction">
    <interactant intactId="EBI-641237">
        <id>P09619</id>
    </interactant>
    <interactant intactId="EBI-525905">
        <id>P14778</id>
        <label>IL1R1</label>
    </interactant>
    <organismsDiffer>false</organismsDiffer>
    <experiments>2</experiments>
</comment>
<comment type="interaction">
    <interactant intactId="EBI-641237">
        <id>P09619</id>
    </interactant>
    <interactant intactId="EBI-1005487">
        <id>P35968</id>
        <label>KDR</label>
    </interactant>
    <organismsDiffer>false</organismsDiffer>
    <experiments>2</experiments>
</comment>
<comment type="interaction">
    <interactant intactId="EBI-641237">
        <id>P09619</id>
    </interactant>
    <interactant intactId="EBI-740929">
        <id>Q53G59</id>
        <label>KLHL12</label>
    </interactant>
    <organismsDiffer>false</organismsDiffer>
    <experiments>6</experiments>
</comment>
<comment type="interaction">
    <interactant intactId="EBI-641237">
        <id>P09619</id>
    </interactant>
    <interactant intactId="EBI-10981970">
        <id>Q5T749</id>
        <label>KPRP</label>
    </interactant>
    <organismsDiffer>false</organismsDiffer>
    <experiments>3</experiments>
</comment>
<comment type="interaction">
    <interactant intactId="EBI-641237">
        <id>P09619</id>
    </interactant>
    <interactant intactId="EBI-948001">
        <id>Q15323</id>
        <label>KRT31</label>
    </interactant>
    <organismsDiffer>false</organismsDiffer>
    <experiments>3</experiments>
</comment>
<comment type="interaction">
    <interactant intactId="EBI-641237">
        <id>P09619</id>
    </interactant>
    <interactant intactId="EBI-1047093">
        <id>O76011</id>
        <label>KRT34</label>
    </interactant>
    <organismsDiffer>false</organismsDiffer>
    <experiments>3</experiments>
</comment>
<comment type="interaction">
    <interactant intactId="EBI-641237">
        <id>P09619</id>
    </interactant>
    <interactant intactId="EBI-10172052">
        <id>P60411</id>
        <label>KRTAP10-9</label>
    </interactant>
    <organismsDiffer>false</organismsDiffer>
    <experiments>3</experiments>
</comment>
<comment type="interaction">
    <interactant intactId="EBI-641237">
        <id>P09619</id>
    </interactant>
    <interactant intactId="EBI-11953334">
        <id>P60328</id>
        <label>KRTAP12-3</label>
    </interactant>
    <organismsDiffer>false</organismsDiffer>
    <experiments>3</experiments>
</comment>
<comment type="interaction">
    <interactant intactId="EBI-641237">
        <id>P09619</id>
    </interactant>
    <interactant intactId="EBI-2830372">
        <id>O94898</id>
        <label>LRIG2</label>
    </interactant>
    <organismsDiffer>false</organismsDiffer>
    <experiments>3</experiments>
</comment>
<comment type="interaction">
    <interactant intactId="EBI-641237">
        <id>P09619</id>
    </interactant>
    <interactant intactId="EBI-910915">
        <id>O75581</id>
        <label>LRP6</label>
    </interactant>
    <organismsDiffer>false</organismsDiffer>
    <experiments>3</experiments>
</comment>
<comment type="interaction">
    <interactant intactId="EBI-641237">
        <id>P09619</id>
    </interactant>
    <interactant intactId="EBI-349787">
        <id>O14745</id>
        <label>NHERF1</label>
    </interactant>
    <organismsDiffer>false</organismsDiffer>
    <experiments>5</experiments>
</comment>
<comment type="interaction">
    <interactant intactId="EBI-641237">
        <id>P09619</id>
    </interactant>
    <interactant intactId="EBI-1554925">
        <id>P01127</id>
        <label>PDGFB</label>
    </interactant>
    <organismsDiffer>false</organismsDiffer>
    <experiments>16</experiments>
</comment>
<comment type="interaction">
    <interactant intactId="EBI-641237">
        <id>P09619</id>
    </interactant>
    <interactant intactId="EBI-79464">
        <id>P27986</id>
        <label>PIK3R1</label>
    </interactant>
    <organismsDiffer>false</organismsDiffer>
    <experiments>21</experiments>
</comment>
<comment type="interaction">
    <interactant intactId="EBI-641237">
        <id>P09619</id>
    </interactant>
    <interactant intactId="EBI-79387">
        <id>P19174</id>
        <label>PLCG1</label>
    </interactant>
    <organismsDiffer>false</organismsDiffer>
    <experiments>7</experiments>
</comment>
<comment type="interaction">
    <interactant intactId="EBI-641237">
        <id>P09619</id>
    </interactant>
    <interactant intactId="EBI-696162">
        <id>P60484</id>
        <label>PTEN</label>
    </interactant>
    <organismsDiffer>false</organismsDiffer>
    <experiments>3</experiments>
</comment>
<comment type="interaction">
    <interactant intactId="EBI-641237">
        <id>P09619</id>
    </interactant>
    <interactant intactId="EBI-968788">
        <id>P18031</id>
        <label>PTPN1</label>
    </interactant>
    <organismsDiffer>false</organismsDiffer>
    <experiments>3</experiments>
</comment>
<comment type="interaction">
    <interactant intactId="EBI-641237">
        <id>P09619</id>
    </interactant>
    <interactant intactId="EBI-297779">
        <id>Q06124</id>
        <label>PTPN11</label>
    </interactant>
    <organismsDiffer>false</organismsDiffer>
    <experiments>8</experiments>
</comment>
<comment type="interaction">
    <interactant intactId="EBI-641237">
        <id>P09619</id>
    </interactant>
    <interactant intactId="EBI-2266035">
        <id>Q05209</id>
        <label>PTPN12</label>
    </interactant>
    <organismsDiffer>false</organismsDiffer>
    <experiments>3</experiments>
</comment>
<comment type="interaction">
    <interactant intactId="EBI-641237">
        <id>P09619</id>
    </interactant>
    <interactant intactId="EBI-2264500">
        <id>Q12913</id>
        <label>PTPRJ</label>
    </interactant>
    <organismsDiffer>false</organismsDiffer>
    <experiments>4</experiments>
</comment>
<comment type="interaction">
    <interactant intactId="EBI-641237">
        <id>P09619</id>
    </interactant>
    <interactant intactId="EBI-1026476">
        <id>P20936</id>
        <label>RASA1</label>
    </interactant>
    <organismsDiffer>false</organismsDiffer>
    <experiments>3</experiments>
</comment>
<comment type="interaction">
    <interactant intactId="EBI-641237">
        <id>P09619</id>
    </interactant>
    <interactant intactId="EBI-726214">
        <id>Q13239</id>
        <label>SLA</label>
    </interactant>
    <organismsDiffer>false</organismsDiffer>
    <experiments>4</experiments>
</comment>
<comment type="interaction">
    <interactant intactId="EBI-641237">
        <id>P09619</id>
    </interactant>
    <interactant intactId="EBI-742327">
        <id>Q15654</id>
        <label>TRIP6</label>
    </interactant>
    <organismsDiffer>false</organismsDiffer>
    <experiments>3</experiments>
</comment>
<comment type="interaction">
    <interactant intactId="EBI-641237">
        <id>P09619</id>
    </interactant>
    <interactant intactId="EBI-7015490">
        <id>P0CK45</id>
        <label>E5</label>
    </interactant>
    <organismsDiffer>true</organismsDiffer>
    <experiments>2</experiments>
</comment>
<comment type="interaction">
    <interactant intactId="EBI-641237">
        <id>P09619</id>
    </interactant>
    <interactant intactId="EBI-1555005">
        <id>P35918</id>
        <label>Kdr</label>
    </interactant>
    <organismsDiffer>true</organismsDiffer>
    <experiments>4</experiments>
</comment>
<comment type="interaction">
    <interactant intactId="EBI-641237">
        <id>P09619</id>
    </interactant>
    <interactant intactId="EBI-520244">
        <id>P23727</id>
        <label>PIK3R1</label>
    </interactant>
    <organismsDiffer>true</organismsDiffer>
    <experiments>6</experiments>
</comment>
<comment type="interaction">
    <interactant intactId="EBI-641237">
        <id>P09619</id>
    </interactant>
    <interactant intactId="EBI-8013886">
        <id>P08487</id>
        <label>PLCG1</label>
    </interactant>
    <organismsDiffer>true</organismsDiffer>
    <experiments>3</experiments>
</comment>
<comment type="interaction">
    <interactant intactId="EBI-641237">
        <id>P09619</id>
    </interactant>
    <interactant intactId="EBI-7180604">
        <id>P41499</id>
        <label>Ptpn11</label>
    </interactant>
    <organismsDiffer>true</organismsDiffer>
    <experiments>4</experiments>
</comment>
<comment type="interaction">
    <interactant intactId="EBI-641237">
        <id>P09619</id>
    </interactant>
    <interactant intactId="EBI-8636140">
        <id>P25020</id>
        <label>V-SRC</label>
    </interactant>
    <organismsDiffer>true</organismsDiffer>
    <experiments>4</experiments>
</comment>
<comment type="subcellular location">
    <subcellularLocation>
        <location>Cell membrane</location>
        <topology>Single-pass type I membrane protein</topology>
    </subcellularLocation>
    <subcellularLocation>
        <location>Cytoplasmic vesicle</location>
    </subcellularLocation>
    <subcellularLocation>
        <location>Lysosome lumen</location>
    </subcellularLocation>
    <text>After ligand binding, the autophosphorylated receptor is ubiquitinated and internalized, leading to its degradation.</text>
</comment>
<comment type="alternative products">
    <event type="alternative splicing"/>
    <isoform>
        <id>P09619-1</id>
        <name>1</name>
        <sequence type="displayed"/>
    </isoform>
    <isoform>
        <id>P09619-2</id>
        <name>2</name>
        <sequence type="described" ref="VSP_056008 VSP_056009"/>
    </isoform>
</comment>
<comment type="PTM">
    <text evidence="9 17 19 20 25 27 43 52">Autophosphorylated on tyrosine residues upon ligand binding. Autophosphorylation occurs in trans, i.e. one subunit of the dimeric receptor phosphorylates tyrosine residues on the other subunit. Phosphorylation at Tyr-579, and to a lesser degree, at Tyr-581, is important for interaction with SRC family kinases. Phosphorylation at Tyr-740 and Tyr-751 is important for interaction with PIK3R1. Phosphorylation at Tyr-751 is important for interaction with NCK1. Phosphorylation at Tyr-771 and Tyr-857 is important for interaction with RASA1/GAP. Phosphorylation at Tyr-857 is important for efficient phosphorylation of PLCG1 and PTPN11, resulting in increased phosphorylation of AKT1, MAPK1/ERK2 and/or MAPK3/ERK1, PDCD6IP/ALIX and STAM, and in increased cell proliferation. Phosphorylation at Tyr-1009 is important for interaction with PTPN11. Phosphorylation at Tyr-1009 and Tyr-1021 is important for interaction with PLCG1. Phosphorylation at Tyr-1021 is important for interaction with CBL; PLCG1 and CBL compete for the same binding site. Dephosphorylated by PTPRJ at Tyr-751, Tyr-857, Tyr-1009 and Tyr-1021. Dephosphorylated by PTPN2 at Tyr-579 and Tyr-1021.</text>
</comment>
<comment type="PTM">
    <text evidence="33 48">N-glycosylated.</text>
</comment>
<comment type="PTM">
    <text evidence="16 29">Ubiquitinated. After autophosphorylation, the receptor is polyubiquitinated, leading to its degradation.</text>
</comment>
<comment type="disease">
    <text>A chromosomal aberration involving PDGFRB is found in a form of chronic myelomonocytic leukemia (CMML). Translocation t(5;12)(q33;p13) with EVT6/TEL. It is characterized by abnormal clonal myeloid proliferation and by progression to acute myelogenous leukemia (AML).</text>
</comment>
<comment type="disease">
    <disease id="DI-02609">
        <name>Myeloproliferative disorder chronic with eosinophilia</name>
        <acronym>MPE</acronym>
        <description>A hematologic disorder characterized by malignant eosinophils proliferation.</description>
        <dbReference type="MIM" id="131440"/>
    </disease>
    <text evidence="14 15 24 37">The gene represented in this entry may be involved in disease pathogenesis. Chromosomal aberrations involving PDGFRB have been found in many instances of chronic myeloproliferative disorder with eosinophilia. Translocation t(5;12) with ETV6 on chromosome 12 creating an PDGFRB-ETV6 fusion protein (PubMed:12181402). Translocation t(5;15)(q33;q22) with TP53BP1 creating a PDGFRB-TP53BP1 fusion protein (PubMed:15492236). Translocation t(1;5)(q23;q33) that forms a PDE4DIP-PDGFRB fusion protein (PubMed:12907457). Translocation t(5;6)(q33-34;q23) with CEP85L that fuses the 5'-end of CEP85L (isoform 4) to the 3'-end of PDGFRB (PubMed:21938754).</text>
</comment>
<comment type="disease">
    <disease id="DI-01171">
        <name>Leukemia, acute myelogenous</name>
        <acronym>AML</acronym>
        <description>A subtype of acute leukemia, a cancer of the white blood cells. AML is a malignant disease of bone marrow characterized by maturational arrest of hematopoietic precursors at an early stage of development. Clonal expansion of myeloid blasts occurs in bone marrow, blood, and other tissue. Myelogenous leukemias develop from changes in cells that normally produce neutrophils, basophils, eosinophils and monocytes.</description>
        <dbReference type="MIM" id="601626"/>
    </disease>
    <text evidence="58">The gene represented in this entry may be involved in disease pathogenesis. A chromosomal aberration involving PDGFRB has been found in a patient with AML. Translocation t(5;14)(q33;q32) with TRIP11 (PubMed:9373237).</text>
</comment>
<comment type="disease">
    <disease id="DI-01851">
        <name>Leukemia, juvenile myelomonocytic</name>
        <acronym>JMML</acronym>
        <description>An aggressive pediatric myelodysplastic syndrome/myeloproliferative disorder characterized by malignant transformation in the hematopoietic stem cell compartment with proliferation of differentiated progeny. Patients have splenomegaly, enlarged lymph nodes, rashes, and hemorrhages.</description>
        <dbReference type="MIM" id="607785"/>
    </disease>
    <text evidence="21">The gene represented in this entry may be involved in disease pathogenesis. A chromosomal aberration involving PDGFRB has been found in a patient with JMML. Translocation t(5;17)(q33;p11.2) with SPECC1 (PubMed:15087372).</text>
</comment>
<comment type="disease" evidence="38 41 46">
    <disease id="DI-03665">
        <name>Basal ganglia calcification, idiopathic, 4</name>
        <acronym>IBGC4</acronym>
        <description>A form of basal ganglia calcification, an autosomal dominant condition characterized by symmetric calcification in the basal ganglia and other brain regions. Affected individuals can either be asymptomatic or show a wide spectrum of neuropsychiatric symptoms, including parkinsonism, dystonia, tremor, ataxia, dementia, psychosis, seizures, and chronic headache. Serum levels of calcium, phosphate, alkaline phosphatase and parathyroid hormone are normal. The neuropathological hallmark of the disease is vascular and pericapillary calcification, mainly of calcium phosphate, in the affected brain areas.</description>
        <dbReference type="MIM" id="615007"/>
    </disease>
    <text>The disease is caused by variants affecting the gene represented in this entry.</text>
</comment>
<comment type="disease" evidence="39 40">
    <disease id="DI-03815">
        <name>Myofibromatosis, infantile 1</name>
        <acronym>IMF1</acronym>
        <description>A rare mesenchymal disorder characterized by the development of benign tumors in the skin, striated muscles, bones, and, more rarely, visceral organs. Subcutaneous or soft tissue nodules commonly involve the skin of the head, neck, and trunk. Skeletal and muscular lesions occur in about half of the patients. Lesions may be solitary or multicentric, and they may be present at birth or become apparent in early infancy or occasionally in adult life. Visceral lesions are associated with high morbidity and mortality.</description>
        <dbReference type="MIM" id="228550"/>
    </disease>
    <text>The disease is caused by variants affecting the gene represented in this entry.</text>
</comment>
<comment type="disease" evidence="42">
    <disease id="DI-04560">
        <name>Kosaki overgrowth syndrome</name>
        <acronym>KOGS</acronym>
        <description>A syndrome characterized by somatic overgrowth, distinctive facial features, hyperelastic and fragile skin, and progressive neurologic deterioration with white matter lesions on brain imaging.</description>
        <dbReference type="MIM" id="616592"/>
    </disease>
    <text>The disease is caused by variants affecting the gene represented in this entry.</text>
</comment>
<comment type="disease" evidence="45 49">
    <disease id="DI-04566">
        <name>Premature aging syndrome, Penttinen type</name>
        <acronym>PENTT</acronym>
        <description>An autosomal dominant syndrome characterized by a prematurely aged appearance with lipoatrophy, epidermal and dermal atrophy along with hypertrophic lesions that resemble scars, thin hair, proptosis, underdeveloped cheekbones, and marked acro-osteolysis.</description>
        <dbReference type="MIM" id="601812"/>
    </disease>
    <text>The disease is caused by variants affecting the gene represented in this entry.</text>
</comment>
<comment type="disease" evidence="50">
    <disease id="DI-06996">
        <name>Ocular pterygium-digital keloid dysplasia syndrome</name>
        <acronym>OPDKD</acronym>
        <description>An autosomal dominant disorder that presents in childhood with aggressive ingrowth of vascularized connective tissue on the cornea, ultimately leading to loss of vision. Later, affected individuals develop keloids on digits after minor trauma, but are otherwise healthy.</description>
        <dbReference type="MIM" id="621091"/>
    </disease>
    <text>The disease may be caused by variants affecting the gene represented in this entry.</text>
</comment>
<comment type="similarity">
    <text evidence="4">Belongs to the protein kinase superfamily. Tyr protein kinase family. CSF-1/PDGF receptor subfamily.</text>
</comment>
<comment type="online information" name="Atlas of Genetics and Cytogenetics in Oncology and Haematology">
    <link uri="https://atlasgeneticsoncology.org/gene/21/PDGFRB"/>
</comment>
<protein>
    <recommendedName>
        <fullName>Platelet-derived growth factor receptor beta</fullName>
        <shortName>PDGF-R-beta</shortName>
        <shortName>PDGFR-beta</shortName>
        <ecNumber>2.7.10.1</ecNumber>
    </recommendedName>
    <alternativeName>
        <fullName>Beta platelet-derived growth factor receptor</fullName>
    </alternativeName>
    <alternativeName>
        <fullName>Beta-type platelet-derived growth factor receptor</fullName>
    </alternativeName>
    <alternativeName>
        <fullName>CD140 antigen-like family member B</fullName>
    </alternativeName>
    <alternativeName>
        <fullName>Platelet-derived growth factor receptor 1</fullName>
        <shortName>PDGFR-1</shortName>
    </alternativeName>
    <cdAntigenName>CD140b</cdAntigenName>
</protein>
<accession>P09619</accession>
<accession>B5A957</accession>
<accession>Q8N5L4</accession>
<feature type="signal peptide" evidence="22">
    <location>
        <begin position="1"/>
        <end position="32"/>
    </location>
</feature>
<feature type="chain" id="PRO_0000016757" description="Platelet-derived growth factor receptor beta">
    <location>
        <begin position="33"/>
        <end position="1106"/>
    </location>
</feature>
<feature type="topological domain" description="Extracellular" evidence="2">
    <location>
        <begin position="33"/>
        <end position="532"/>
    </location>
</feature>
<feature type="transmembrane region" description="Helical" evidence="2">
    <location>
        <begin position="533"/>
        <end position="553"/>
    </location>
</feature>
<feature type="topological domain" description="Cytoplasmic" evidence="2">
    <location>
        <begin position="554"/>
        <end position="1106"/>
    </location>
</feature>
<feature type="domain" description="Ig-like C2-type 1">
    <location>
        <begin position="33"/>
        <end position="120"/>
    </location>
</feature>
<feature type="domain" description="Ig-like C2-type 2">
    <location>
        <begin position="129"/>
        <end position="210"/>
    </location>
</feature>
<feature type="domain" description="Ig-like C2-type 3">
    <location>
        <begin position="214"/>
        <end position="309"/>
    </location>
</feature>
<feature type="domain" description="Ig-like C2-type 4">
    <location>
        <begin position="331"/>
        <end position="403"/>
    </location>
</feature>
<feature type="domain" description="Ig-like C2-type 5">
    <location>
        <begin position="416"/>
        <end position="524"/>
    </location>
</feature>
<feature type="domain" description="Protein kinase" evidence="4">
    <location>
        <begin position="600"/>
        <end position="962"/>
    </location>
</feature>
<feature type="region of interest" description="Disordered" evidence="6">
    <location>
        <begin position="1019"/>
        <end position="1106"/>
    </location>
</feature>
<feature type="compositionally biased region" description="Polar residues" evidence="6">
    <location>
        <begin position="1043"/>
        <end position="1060"/>
    </location>
</feature>
<feature type="compositionally biased region" description="Acidic residues" evidence="6">
    <location>
        <begin position="1066"/>
        <end position="1088"/>
    </location>
</feature>
<feature type="active site" description="Proton acceptor" evidence="4 5">
    <location>
        <position position="826"/>
    </location>
</feature>
<feature type="binding site" evidence="4">
    <location>
        <begin position="606"/>
        <end position="614"/>
    </location>
    <ligand>
        <name>ATP</name>
        <dbReference type="ChEBI" id="CHEBI:30616"/>
    </ligand>
</feature>
<feature type="binding site" evidence="61">
    <location>
        <position position="634"/>
    </location>
    <ligand>
        <name>ATP</name>
        <dbReference type="ChEBI" id="CHEBI:30616"/>
    </ligand>
</feature>
<feature type="site" description="Breakpoint for insertion to form PDE4DIP-PDGFRB fusion protein">
    <location>
        <begin position="527"/>
        <end position="528"/>
    </location>
</feature>
<feature type="site" description="Breakpoint for translocation to form TRIP11-PDGFRB">
    <location>
        <begin position="527"/>
        <end position="528"/>
    </location>
</feature>
<feature type="site" description="Breakpoint for translocation to form the CEP85L-PDGFRB fusion protein">
    <location>
        <begin position="558"/>
        <end position="559"/>
    </location>
</feature>
<feature type="modified residue" description="Phosphotyrosine; by autocatalysis" evidence="9">
    <location>
        <position position="562"/>
    </location>
</feature>
<feature type="modified residue" description="Phosphotyrosine; by autocatalysis" evidence="20 25 52">
    <location>
        <position position="579"/>
    </location>
</feature>
<feature type="modified residue" description="Phosphotyrosine; by autocatalysis" evidence="25 52">
    <location>
        <position position="581"/>
    </location>
</feature>
<feature type="modified residue" description="Phosphotyrosine; by ABL1 and ABL2" evidence="1">
    <location>
        <position position="686"/>
    </location>
</feature>
<feature type="modified residue" description="Phosphotyrosine; by autocatalysis" evidence="25">
    <location>
        <position position="716"/>
    </location>
</feature>
<feature type="modified residue" description="Phosphotyrosine; by autocatalysis" evidence="17 25">
    <location>
        <position position="740"/>
    </location>
</feature>
<feature type="modified residue" description="Phosphotyrosine; by autocatalysis" evidence="9 17 20 27 43">
    <location>
        <position position="751"/>
    </location>
</feature>
<feature type="modified residue" description="Phosphotyrosine; by autocatalysis" evidence="9">
    <location>
        <position position="763"/>
    </location>
</feature>
<feature type="modified residue" description="Phosphotyrosine; by autocatalysis" evidence="9 17 20 25">
    <location>
        <position position="771"/>
    </location>
</feature>
<feature type="modified residue" description="Phosphotyrosine; by autocatalysis" evidence="9">
    <location>
        <position position="775"/>
    </location>
</feature>
<feature type="modified residue" description="Phosphotyrosine; by autocatalysis" evidence="9">
    <location>
        <position position="778"/>
    </location>
</feature>
<feature type="modified residue" description="Phosphotyrosine; by autocatalysis" evidence="9 17 25 27 43">
    <location>
        <position position="857"/>
    </location>
</feature>
<feature type="modified residue" description="Phosphotyrosine; by ABL1 and ABL2" evidence="1">
    <location>
        <position position="934"/>
    </location>
</feature>
<feature type="modified residue" description="Phosphotyrosine; by ABL1 and ABL2" evidence="1">
    <location>
        <position position="970"/>
    </location>
</feature>
<feature type="modified residue" description="Phosphotyrosine; by autocatalysis" evidence="9 19 25">
    <location>
        <position position="1009"/>
    </location>
</feature>
<feature type="modified residue" description="Phosphotyrosine; by autocatalysis" evidence="9 19 20 25">
    <location>
        <position position="1021"/>
    </location>
</feature>
<feature type="glycosylation site" description="N-linked (GlcNAc...) asparagine" evidence="2">
    <location>
        <position position="45"/>
    </location>
</feature>
<feature type="glycosylation site" description="N-linked (GlcNAc...) asparagine" evidence="33">
    <location>
        <position position="89"/>
    </location>
</feature>
<feature type="glycosylation site" description="N-linked (GlcNAc...) asparagine" evidence="33">
    <location>
        <position position="103"/>
    </location>
</feature>
<feature type="glycosylation site" description="N-linked (GlcNAc...) asparagine" evidence="33">
    <location>
        <position position="215"/>
    </location>
</feature>
<feature type="glycosylation site" description="N-linked (GlcNAc...) asparagine" evidence="33">
    <location>
        <position position="230"/>
    </location>
</feature>
<feature type="glycosylation site" description="N-linked (GlcNAc...) asparagine" evidence="33">
    <location>
        <position position="292"/>
    </location>
</feature>
<feature type="glycosylation site" description="N-linked (GlcNAc...) asparagine" evidence="33">
    <location>
        <position position="307"/>
    </location>
</feature>
<feature type="glycosylation site" description="N-linked (GlcNAc...) asparagine" evidence="2">
    <location>
        <position position="354"/>
    </location>
</feature>
<feature type="glycosylation site" description="N-linked (GlcNAc...) asparagine" evidence="2">
    <location>
        <position position="371"/>
    </location>
</feature>
<feature type="glycosylation site" description="N-linked (GlcNAc...) asparagine" evidence="2">
    <location>
        <position position="468"/>
    </location>
</feature>
<feature type="glycosylation site" description="N-linked (GlcNAc...) asparagine" evidence="2">
    <location>
        <position position="479"/>
    </location>
</feature>
<feature type="disulfide bond" evidence="3 33">
    <location>
        <begin position="54"/>
        <end position="100"/>
    </location>
</feature>
<feature type="disulfide bond" evidence="3 33">
    <location>
        <begin position="149"/>
        <end position="190"/>
    </location>
</feature>
<feature type="disulfide bond" evidence="3 33">
    <location>
        <begin position="235"/>
        <end position="291"/>
    </location>
</feature>
<feature type="disulfide bond" evidence="3">
    <location>
        <begin position="436"/>
        <end position="508"/>
    </location>
</feature>
<feature type="splice variant" id="VSP_056008" description="In isoform 2." evidence="60">
    <original>VESGYVRLLGEVGTLQFAELHRSRTL</original>
    <variation>RAATCGSWERWAHYNLLSCIGAGHCR</variation>
    <location>
        <begin position="311"/>
        <end position="336"/>
    </location>
</feature>
<feature type="splice variant" id="VSP_056009" description="In isoform 2." evidence="60">
    <location>
        <begin position="337"/>
        <end position="1106"/>
    </location>
</feature>
<feature type="sequence variant" id="VAR_034377" description="In dbSNP:rs17110944." evidence="28">
    <original>I</original>
    <variation>F</variation>
    <location>
        <position position="29"/>
    </location>
</feature>
<feature type="sequence variant" id="VAR_035125" description="In dbSNP:rs17853027." evidence="23">
    <original>S</original>
    <variation>F</variation>
    <location>
        <position position="180"/>
    </location>
</feature>
<feature type="sequence variant" id="VAR_042027" description="In dbSNP:rs34586048." evidence="28">
    <original>E</original>
    <variation>K</variation>
    <location>
        <position position="282"/>
    </location>
</feature>
<feature type="sequence variant" id="VAR_049717" description="In dbSNP:rs2229558.">
    <original>P</original>
    <variation>S</variation>
    <location>
        <position position="345"/>
    </location>
</feature>
<feature type="sequence variant" id="VAR_042028" description="In dbSNP:rs41287110." evidence="28">
    <original>E</original>
    <variation>K</variation>
    <location>
        <position position="485"/>
    </location>
</feature>
<feature type="sequence variant" id="VAR_069925" description="In IMF1; dbSNP:rs367543286." evidence="39">
    <original>R</original>
    <variation>C</variation>
    <location>
        <position position="561"/>
    </location>
</feature>
<feature type="sequence variant" id="VAR_075865" description="In KOGS; dbSNP:rs863224946." evidence="42">
    <original>P</original>
    <variation>R</variation>
    <location>
        <position position="584"/>
    </location>
</feature>
<feature type="sequence variant" id="VAR_042029" description="In a gastric adenocarcinoma sample; somatic mutation." evidence="28">
    <original>Y</original>
    <variation>H</variation>
    <location>
        <position position="589"/>
    </location>
</feature>
<feature type="sequence variant" id="VAR_069320" description="In IBGC4; no effect on protein abundance; loss of PDGF beta receptor activity; dbSNP:rs397509381." evidence="38 41 46">
    <original>L</original>
    <variation>P</variation>
    <location>
        <position position="658"/>
    </location>
</feature>
<feature type="sequence variant" id="VAR_069926" description="In IMF1; dbSNP:rs144050370." evidence="40">
    <original>P</original>
    <variation>T</variation>
    <location>
        <position position="660"/>
    </location>
</feature>
<feature type="sequence variant" id="VAR_075866" description="In PENTT; gain of function in protein tyrosine kinase activity; shows ligand-independent constitutive signaling; dbSNP:rs1554108211." evidence="45">
    <original>V</original>
    <variation>A</variation>
    <location>
        <position position="665"/>
    </location>
</feature>
<feature type="sequence variant" id="VAR_090402" description="In PENTT; likely pathogenic; gain-of-function variant resulting in constitutive autophosphorylation and increased phosphorylation of downstream signaling proteins; levels of protein phosphorylation are similar at 32 and 37 degrees Celsius." evidence="49">
    <original>N</original>
    <variation>S</variation>
    <location>
        <position position="666"/>
    </location>
</feature>
<feature type="sequence variant" id="VAR_090403" description="In OPDKD; likely pathogenic; gain-of-function variant resulting in temperature-dependent constitutive autophosphorylation and increased phosphorylation of downstream signaling proteins; levels of protein phosphorylation at 32 degrees Celsius are higher than at 37 degrees." evidence="50">
    <original>N</original>
    <variation>Y</variation>
    <location>
        <position position="666"/>
    </location>
</feature>
<feature type="sequence variant" id="VAR_042030" description="In dbSNP:rs35322465." evidence="28">
    <original>N</original>
    <variation>Y</variation>
    <location>
        <position position="718"/>
    </location>
</feature>
<feature type="sequence variant" id="VAR_042031" description="In a breast infiltrating ductal carcinoma sample; somatic mutation." evidence="28">
    <original>T</original>
    <variation>I</variation>
    <location>
        <position position="882"/>
    </location>
</feature>
<feature type="sequence variant" id="VAR_069321" description="In IBGC4; decreased protein abundance; no effect on receptor activity; decreased PDGF signaling pathway; dbSNP:rs397509382." evidence="38 41 46">
    <original>R</original>
    <variation>W</variation>
    <location>
        <position position="987"/>
    </location>
</feature>
<feature type="sequence variant" id="VAR_075395" description="In IBGC4; no effect on protein abundance; no effect on receptor activity; decreased PDGF signaling pathway." evidence="41 46">
    <original>E</original>
    <variation>V</variation>
    <location>
        <position position="1071"/>
    </location>
</feature>
<feature type="mutagenesis site" description="Loss of kinase activity; when associated with F-581. Strongly reduces interaction with SRC family kinases. No effect on interaction with GRB10." evidence="7 52">
    <original>Y</original>
    <variation>F</variation>
    <location>
        <position position="579"/>
    </location>
</feature>
<feature type="mutagenesis site" description="Loss of kinase activity; when associated with F-579. No effect on interaction with GRB10." evidence="7 52">
    <original>Y</original>
    <variation>F</variation>
    <location>
        <position position="581"/>
    </location>
</feature>
<feature type="mutagenesis site" description="Loss of kinase activity. Abolishes interaction with RASA1. No effect on phosphatidylinositol 3-kinase activity." evidence="17 30 31">
    <original>K</original>
    <variation>A</variation>
    <variation>R</variation>
    <location>
        <position position="634"/>
    </location>
</feature>
<feature type="mutagenesis site" description="No effect neither on interaction with GRB10 and RASA1 nor on phosphatidylinositol 3-kinase activity." evidence="7 17">
    <original>Y</original>
    <variation>F</variation>
    <location>
        <position position="716"/>
    </location>
</feature>
<feature type="mutagenesis site" description="Strongly reduces up-regulation of cell proliferation; when associated with F-751. Strongly decreases phosphatidylinositol 3-kinase activity. No effect on interaction with GRB10 and RASA1." evidence="7 17 18 35">
    <original>Y</original>
    <variation>F</variation>
    <location>
        <position position="740"/>
    </location>
</feature>
<feature type="mutagenesis site" description="Strongly reduces up-regulation of cell proliferation; when associated with F-740. Abolishes phosphatidylinositol 3-kinase activity and interaction with NCK1, and slightly reduces interaction with RASA1. No effect on interaction with GRB10." evidence="7 17 18 26 35 54">
    <original>Y</original>
    <variation>F</variation>
    <location>
        <position position="751"/>
    </location>
</feature>
<feature type="mutagenesis site" description="No effect on interaction with RASA1 and on phosphatidylinositol 3-kinase activity." evidence="17">
    <original>Y</original>
    <variation>F</variation>
    <location>
        <position position="763"/>
    </location>
</feature>
<feature type="mutagenesis site" description="Loss of interaction with GRB10. Abolishes interaction with RASA1. No effect on phosphatidylinositol 3-kinase activity." evidence="7 17 18">
    <original>Y</original>
    <variation>F</variation>
    <location>
        <position position="771"/>
    </location>
</feature>
<feature type="mutagenesis site" description="No effect on interaction with RASA1 and on phosphatidylinositol 3-kinase activity." evidence="17">
    <original>Y</original>
    <variation>F</variation>
    <location>
        <position position="775"/>
    </location>
</feature>
<feature type="mutagenesis site" description="Strongly reduces expression levels." evidence="17">
    <original>Y</original>
    <variation>F</variation>
    <location>
        <position position="778"/>
    </location>
</feature>
<feature type="mutagenesis site" description="Reduces kinase activity. No effect on interaction with GRB10. Abolishes interaction with RASA1. No effect on phosphatidylinositol 3-kinase activity." evidence="7 17 26 31">
    <original>Y</original>
    <variation>F</variation>
    <location>
        <position position="857"/>
    </location>
</feature>
<feature type="mutagenesis site" description="No effect on interaction with GRB10. Abolishes interaction with PLCG1; when associated with F-1021." evidence="7 19 53">
    <original>Y</original>
    <variation>F</variation>
    <location>
        <position position="1009"/>
    </location>
</feature>
<feature type="mutagenesis site" description="Strongly reduces up-regulation of cell proliferation. Abolishes interaction with PLCG1; when associated with F-1009. No effect on interaction with GRB10." evidence="7 19 29 35">
    <original>Y</original>
    <variation>F</variation>
    <location>
        <position position="1021"/>
    </location>
</feature>
<feature type="sequence conflict" description="In Ref. 2; AAA36427." evidence="61" ref="2">
    <original>E</original>
    <variation>D</variation>
    <location>
        <position position="241"/>
    </location>
</feature>
<feature type="strand" evidence="63">
    <location>
        <begin position="40"/>
        <end position="43"/>
    </location>
</feature>
<feature type="strand" evidence="63">
    <location>
        <begin position="50"/>
        <end position="58"/>
    </location>
</feature>
<feature type="strand" evidence="63">
    <location>
        <begin position="61"/>
        <end position="64"/>
    </location>
</feature>
<feature type="strand" evidence="63">
    <location>
        <begin position="70"/>
        <end position="75"/>
    </location>
</feature>
<feature type="strand" evidence="63">
    <location>
        <begin position="81"/>
        <end position="87"/>
    </location>
</feature>
<feature type="helix" evidence="63">
    <location>
        <begin position="92"/>
        <end position="94"/>
    </location>
</feature>
<feature type="strand" evidence="63">
    <location>
        <begin position="96"/>
        <end position="101"/>
    </location>
</feature>
<feature type="strand" evidence="63">
    <location>
        <begin position="114"/>
        <end position="119"/>
    </location>
</feature>
<feature type="helix" evidence="63">
    <location>
        <begin position="132"/>
        <end position="135"/>
    </location>
</feature>
<feature type="strand" evidence="63">
    <location>
        <begin position="136"/>
        <end position="141"/>
    </location>
</feature>
<feature type="strand" evidence="63">
    <location>
        <begin position="145"/>
        <end position="147"/>
    </location>
</feature>
<feature type="strand" evidence="63">
    <location>
        <begin position="158"/>
        <end position="164"/>
    </location>
</feature>
<feature type="turn" evidence="63">
    <location>
        <begin position="175"/>
        <end position="177"/>
    </location>
</feature>
<feature type="strand" evidence="63">
    <location>
        <begin position="178"/>
        <end position="181"/>
    </location>
</feature>
<feature type="strand" evidence="63">
    <location>
        <begin position="185"/>
        <end position="194"/>
    </location>
</feature>
<feature type="strand" evidence="63">
    <location>
        <begin position="197"/>
        <end position="200"/>
    </location>
</feature>
<feature type="strand" evidence="63">
    <location>
        <begin position="204"/>
        <end position="208"/>
    </location>
</feature>
<feature type="strand" evidence="63">
    <location>
        <begin position="217"/>
        <end position="221"/>
    </location>
</feature>
<feature type="strand" evidence="63">
    <location>
        <begin position="223"/>
        <end position="226"/>
    </location>
</feature>
<feature type="strand" evidence="63">
    <location>
        <begin position="231"/>
        <end position="239"/>
    </location>
</feature>
<feature type="strand" evidence="63">
    <location>
        <begin position="241"/>
        <end position="248"/>
    </location>
</feature>
<feature type="strand" evidence="63">
    <location>
        <begin position="252"/>
        <end position="255"/>
    </location>
</feature>
<feature type="strand" evidence="63">
    <location>
        <begin position="261"/>
        <end position="265"/>
    </location>
</feature>
<feature type="turn" evidence="63">
    <location>
        <begin position="267"/>
        <end position="270"/>
    </location>
</feature>
<feature type="strand" evidence="63">
    <location>
        <begin position="271"/>
        <end position="280"/>
    </location>
</feature>
<feature type="strand" evidence="63">
    <location>
        <begin position="287"/>
        <end position="295"/>
    </location>
</feature>
<feature type="turn" evidence="63">
    <location>
        <begin position="296"/>
        <end position="299"/>
    </location>
</feature>
<feature type="strand" evidence="63">
    <location>
        <begin position="300"/>
        <end position="311"/>
    </location>
</feature>
<feature type="helix" evidence="62">
    <location>
        <begin position="530"/>
        <end position="556"/>
    </location>
</feature>